<proteinExistence type="evidence at protein level"/>
<sequence length="631" mass="69936">MPRYGASLRQSCPRSGREQGQDGTAGAPGLLWMGLVLALALALALALALSDSRVLWAPAEAHPLSPQGHPARLHRIVPRLRDVFGWGNLTCPICKGLFTAINLGLKKEPNVARVGSVAIKLCNLLKIAPPAVCQSIVHLFEDDMVEVWRRSVLSPSEACGLLLGSTCGHWDIFSSWNISLPTVPKPPPKPPSPPAPGAPVSRILFLTDLHWDHDYLEGTDPDCADPLCCRRGSGLPPASRPGAGYWGEYSKCDLPLRTLESLLSGLGPAGPFDMVYWTGDIPAHDVWHQTRQDQLRALTTVTALVRKFLGPVPVYPAVGNHESTPVNSFPPPFIEGNHSSRWLYEAMAKAWEPWLPAEALRTLRIGGFYALSPYPGLRLISLNMNFCSRENFWLLINSTDPAGQLQWLVGELQAAEDRGDKVHIIGHIPPGHCLKSWSWNYYRIVARYENTLAAQFFGHTHVDEFEVFYDEETLSRPLAVAFLAPSATTYIGLNPGYRVYQIDGNYSGSSHVVLDHETYILNLTQANIPGAIPHWQLLYRARETYGLPNTLPTAWHNLVYRMRGDMQLFQTFWFLYHKGHPPSEPCGTPCRLATLCAQLSARADSPALCRHLMPDGSLPEAQSLWPRPLFC</sequence>
<protein>
    <recommendedName>
        <fullName evidence="66">Sphingomyelin phosphodiesterase</fullName>
        <ecNumber evidence="14 19 23 24 41 44 56">3.1.4.12</ecNumber>
        <ecNumber evidence="41">3.1.4.3</ecNumber>
    </recommendedName>
    <alternativeName>
        <fullName evidence="63 64 65">Acid sphingomyelinase</fullName>
        <shortName>aSMase</shortName>
    </alternativeName>
    <component>
        <recommendedName>
            <fullName evidence="66">Sphingomyelin phosphodiesterase, processed form</fullName>
        </recommendedName>
    </component>
</protein>
<evidence type="ECO:0000250" key="1">
    <source>
        <dbReference type="UniProtKB" id="Q04519"/>
    </source>
</evidence>
<evidence type="ECO:0000255" key="2">
    <source>
        <dbReference type="PROSITE-ProRule" id="PRU00415"/>
    </source>
</evidence>
<evidence type="ECO:0000256" key="3">
    <source>
        <dbReference type="SAM" id="MobiDB-lite"/>
    </source>
</evidence>
<evidence type="ECO:0000269" key="4">
    <source>
    </source>
</evidence>
<evidence type="ECO:0000269" key="5">
    <source>
    </source>
</evidence>
<evidence type="ECO:0000269" key="6">
    <source>
    </source>
</evidence>
<evidence type="ECO:0000269" key="7">
    <source>
    </source>
</evidence>
<evidence type="ECO:0000269" key="8">
    <source>
    </source>
</evidence>
<evidence type="ECO:0000269" key="9">
    <source>
    </source>
</evidence>
<evidence type="ECO:0000269" key="10">
    <source>
    </source>
</evidence>
<evidence type="ECO:0000269" key="11">
    <source>
    </source>
</evidence>
<evidence type="ECO:0000269" key="12">
    <source>
    </source>
</evidence>
<evidence type="ECO:0000269" key="13">
    <source>
    </source>
</evidence>
<evidence type="ECO:0000269" key="14">
    <source>
    </source>
</evidence>
<evidence type="ECO:0000269" key="15">
    <source>
    </source>
</evidence>
<evidence type="ECO:0000269" key="16">
    <source>
    </source>
</evidence>
<evidence type="ECO:0000269" key="17">
    <source>
    </source>
</evidence>
<evidence type="ECO:0000269" key="18">
    <source>
    </source>
</evidence>
<evidence type="ECO:0000269" key="19">
    <source>
    </source>
</evidence>
<evidence type="ECO:0000269" key="20">
    <source>
    </source>
</evidence>
<evidence type="ECO:0000269" key="21">
    <source>
    </source>
</evidence>
<evidence type="ECO:0000269" key="22">
    <source>
    </source>
</evidence>
<evidence type="ECO:0000269" key="23">
    <source>
    </source>
</evidence>
<evidence type="ECO:0000269" key="24">
    <source>
    </source>
</evidence>
<evidence type="ECO:0000269" key="25">
    <source>
    </source>
</evidence>
<evidence type="ECO:0000269" key="26">
    <source>
    </source>
</evidence>
<evidence type="ECO:0000269" key="27">
    <source>
    </source>
</evidence>
<evidence type="ECO:0000269" key="28">
    <source>
    </source>
</evidence>
<evidence type="ECO:0000269" key="29">
    <source>
    </source>
</evidence>
<evidence type="ECO:0000269" key="30">
    <source>
    </source>
</evidence>
<evidence type="ECO:0000269" key="31">
    <source>
    </source>
</evidence>
<evidence type="ECO:0000269" key="32">
    <source>
    </source>
</evidence>
<evidence type="ECO:0000269" key="33">
    <source>
    </source>
</evidence>
<evidence type="ECO:0000269" key="34">
    <source>
    </source>
</evidence>
<evidence type="ECO:0000269" key="35">
    <source>
    </source>
</evidence>
<evidence type="ECO:0000269" key="36">
    <source>
    </source>
</evidence>
<evidence type="ECO:0000269" key="37">
    <source>
    </source>
</evidence>
<evidence type="ECO:0000269" key="38">
    <source>
    </source>
</evidence>
<evidence type="ECO:0000269" key="39">
    <source>
    </source>
</evidence>
<evidence type="ECO:0000269" key="40">
    <source>
    </source>
</evidence>
<evidence type="ECO:0000269" key="41">
    <source>
    </source>
</evidence>
<evidence type="ECO:0000269" key="42">
    <source>
    </source>
</evidence>
<evidence type="ECO:0000269" key="43">
    <source>
    </source>
</evidence>
<evidence type="ECO:0000269" key="44">
    <source>
    </source>
</evidence>
<evidence type="ECO:0000269" key="45">
    <source>
    </source>
</evidence>
<evidence type="ECO:0000269" key="46">
    <source>
    </source>
</evidence>
<evidence type="ECO:0000269" key="47">
    <source>
    </source>
</evidence>
<evidence type="ECO:0000269" key="48">
    <source>
    </source>
</evidence>
<evidence type="ECO:0000269" key="49">
    <source>
    </source>
</evidence>
<evidence type="ECO:0000269" key="50">
    <source>
    </source>
</evidence>
<evidence type="ECO:0000269" key="51">
    <source>
    </source>
</evidence>
<evidence type="ECO:0000269" key="52">
    <source>
    </source>
</evidence>
<evidence type="ECO:0000269" key="53">
    <source>
    </source>
</evidence>
<evidence type="ECO:0000269" key="54">
    <source>
    </source>
</evidence>
<evidence type="ECO:0000269" key="55">
    <source>
    </source>
</evidence>
<evidence type="ECO:0000269" key="56">
    <source>
    </source>
</evidence>
<evidence type="ECO:0000269" key="57">
    <source>
    </source>
</evidence>
<evidence type="ECO:0000269" key="58">
    <source>
    </source>
</evidence>
<evidence type="ECO:0000269" key="59">
    <source>
    </source>
</evidence>
<evidence type="ECO:0000269" key="60">
    <source>
    </source>
</evidence>
<evidence type="ECO:0000269" key="61">
    <source>
    </source>
</evidence>
<evidence type="ECO:0000303" key="62">
    <source>
    </source>
</evidence>
<evidence type="ECO:0000303" key="63">
    <source>
    </source>
</evidence>
<evidence type="ECO:0000303" key="64">
    <source>
    </source>
</evidence>
<evidence type="ECO:0000303" key="65">
    <source>
    </source>
</evidence>
<evidence type="ECO:0000305" key="66"/>
<evidence type="ECO:0000305" key="67">
    <source>
    </source>
</evidence>
<evidence type="ECO:0000305" key="68">
    <source>
    </source>
</evidence>
<evidence type="ECO:0000305" key="69">
    <source>
    </source>
</evidence>
<evidence type="ECO:0000305" key="70">
    <source>
    </source>
</evidence>
<evidence type="ECO:0000305" key="71">
    <source>
    </source>
</evidence>
<evidence type="ECO:0000305" key="72">
    <source>
    </source>
</evidence>
<evidence type="ECO:0000305" key="73">
    <source>
    </source>
</evidence>
<evidence type="ECO:0000305" key="74">
    <source>
    </source>
</evidence>
<evidence type="ECO:0000312" key="75">
    <source>
        <dbReference type="HGNC" id="HGNC:11120"/>
    </source>
</evidence>
<evidence type="ECO:0007744" key="76">
    <source>
        <dbReference type="PDB" id="5I81"/>
    </source>
</evidence>
<evidence type="ECO:0007744" key="77">
    <source>
        <dbReference type="PDB" id="5I85"/>
    </source>
</evidence>
<evidence type="ECO:0007744" key="78">
    <source>
        <dbReference type="PDB" id="5I8R"/>
    </source>
</evidence>
<evidence type="ECO:0007744" key="79">
    <source>
        <dbReference type="PDB" id="5JG8"/>
    </source>
</evidence>
<evidence type="ECO:0007829" key="80">
    <source>
        <dbReference type="PDB" id="5I81"/>
    </source>
</evidence>
<evidence type="ECO:0007829" key="81">
    <source>
        <dbReference type="PDB" id="5JG8"/>
    </source>
</evidence>
<keyword id="KW-0002">3D-structure</keyword>
<keyword id="KW-0025">Alternative splicing</keyword>
<keyword id="KW-0903">Direct protein sequencing</keyword>
<keyword id="KW-0225">Disease variant</keyword>
<keyword id="KW-1015">Disulfide bond</keyword>
<keyword id="KW-0325">Glycoprotein</keyword>
<keyword id="KW-0326">Glycosidase</keyword>
<keyword id="KW-0945">Host-virus interaction</keyword>
<keyword id="KW-0378">Hydrolase</keyword>
<keyword id="KW-0551">Lipid droplet</keyword>
<keyword id="KW-0443">Lipid metabolism</keyword>
<keyword id="KW-0458">Lysosome</keyword>
<keyword id="KW-0479">Metal-binding</keyword>
<keyword id="KW-0523">Neurodegeneration</keyword>
<keyword id="KW-1054">Niemann-Pick disease</keyword>
<keyword id="KW-0597">Phosphoprotein</keyword>
<keyword id="KW-1267">Proteomics identification</keyword>
<keyword id="KW-1185">Reference proteome</keyword>
<keyword id="KW-0964">Secreted</keyword>
<keyword id="KW-0732">Signal</keyword>
<keyword id="KW-0862">Zinc</keyword>
<accession>P17405</accession>
<accession>A8K8M3</accession>
<accession>E9PKS3</accession>
<accession>P17406</accession>
<accession>Q13811</accession>
<accession>Q16837</accession>
<accession>Q16841</accession>
<comment type="function">
    <text evidence="6 23 24 30 31 32 35 41 43 48 50 60 61 66">Converts sphingomyelin to ceramide (PubMed:12563314, PubMed:1840600, PubMed:18815062, PubMed:25339683, PubMed:25920558, PubMed:27659707, PubMed:33163980). Exists as two enzymatic forms that arise from alternative trafficking of a single protein precursor, one that is targeted to the endolysosomal compartment, whereas the other is released extracellularly (PubMed:20807762, PubMed:21098024, PubMed:9660788). However, in response to various forms of stress, lysosomal exocytosis may represent a major source of the secretory form (PubMed:12563314, PubMed:20530211, PubMed:20807762, PubMed:22573858, PubMed:9393854).</text>
</comment>
<comment type="function">
    <text evidence="31 32 41 57">In the lysosomes, converts sphingomyelin to ceramide (PubMed:20807762, PubMed:21098024). Plays an important role in the export of cholesterol from the intraendolysosomal membranes (PubMed:25339683). Also has phospholipase C activities toward 1,2-diacylglycerolphosphocholine and 1,2-diacylglycerolphosphoglycerol (PubMed:25339683). Modulates stress-induced apoptosis through the production of ceramide (PubMed:8706124).</text>
</comment>
<comment type="function">
    <text evidence="6 20 30 31 60">When secreted, modulates cell signaling with its ability to reorganize the plasma membrane by converting sphingomyelin to ceramide (PubMed:12563314, PubMed:17303575, PubMed:20807762). Secreted form is increased in response to stress and inflammatory mediators such as IL1B, IFNG or TNF as well as upon infection with bacteria and viruses (PubMed:12563314, PubMed:20807762, PubMed:9393854). Produces the release of ceramide in the outer leaflet of the plasma membrane playing a central role in host defense (PubMed:12563314, PubMed:20807762, PubMed:9393854). Ceramide reorganizes these rafts into larger signaling platforms that are required to internalize P.aeruginosa, induce apoptosis and regulate the cytokine response in infected cells (PubMed:12563314). In wounded cells, the lysosomal form is released extracellularly in the presence of Ca(2+) and promotes endocytosis and plasma membrane repair (PubMed:20530211).</text>
</comment>
<comment type="function">
    <molecule>Sphingomyelin phosphodiesterase, processed form</molecule>
    <text evidence="1 33">This form is generated following cleavage by CASP7 in the extracellular milieu in response to bacterial infection (PubMed:21157428). It shows increased ability to convert sphingomyelin to ceramide and promotes plasma membrane repair (By similarity). Plasma membrane repair by ceramide counteracts the action of gasdermin-D (GSDMD) perforin (PRF1) pores that are formed in response to bacterial infection (By similarity).</text>
</comment>
<comment type="function">
    <text evidence="6 60 72">(Microbial infection) Secretion is activated by bacteria such as P.aeruginosa, N.gonorrhoeae and others, this activation results in the release of ceramide in the outer leaflet of the plasma membrane which facilitates the infection.</text>
</comment>
<comment type="function">
    <text evidence="35 50">(Microbial infection) Secretion is activated by human coronaviruses SARS-CoV and SARS-CoV-2 as well as Zaire ebolavirus, this activation results in the release of ceramide in the outer leaflet of the plasma membrane which facilitates the infection.</text>
</comment>
<comment type="function">
    <molecule>Isoform 2</molecule>
    <text evidence="23 66">Lacks residues that bind the cofactor Zn(2+) and has no enzyme activity.</text>
</comment>
<comment type="function">
    <molecule>Isoform 3</molecule>
    <text evidence="23 66">Lacks residues that bind the cofactor Zn(2+) and has no enzyme activity.</text>
</comment>
<comment type="catalytic activity">
    <reaction evidence="6 14 19 23 24 35 41 44 47 50 56 57">
        <text>a sphingomyelin + H2O = phosphocholine + an N-acylsphing-4-enine + H(+)</text>
        <dbReference type="Rhea" id="RHEA:19253"/>
        <dbReference type="ChEBI" id="CHEBI:15377"/>
        <dbReference type="ChEBI" id="CHEBI:15378"/>
        <dbReference type="ChEBI" id="CHEBI:17636"/>
        <dbReference type="ChEBI" id="CHEBI:52639"/>
        <dbReference type="ChEBI" id="CHEBI:295975"/>
        <dbReference type="EC" id="3.1.4.12"/>
    </reaction>
    <physiologicalReaction direction="left-to-right" evidence="41 67 68 70 73 74">
        <dbReference type="Rhea" id="RHEA:19254"/>
    </physiologicalReaction>
</comment>
<comment type="catalytic activity">
    <reaction evidence="41">
        <text>N-(octadecanoyl)-sphing-4-enine-1-phosphocholine + H2O = N-octadecanoylsphing-4-enine + phosphocholine + H(+)</text>
        <dbReference type="Rhea" id="RHEA:54284"/>
        <dbReference type="ChEBI" id="CHEBI:15377"/>
        <dbReference type="ChEBI" id="CHEBI:15378"/>
        <dbReference type="ChEBI" id="CHEBI:72961"/>
        <dbReference type="ChEBI" id="CHEBI:83358"/>
        <dbReference type="ChEBI" id="CHEBI:295975"/>
    </reaction>
    <physiologicalReaction direction="left-to-right" evidence="41">
        <dbReference type="Rhea" id="RHEA:54285"/>
    </physiologicalReaction>
</comment>
<comment type="catalytic activity">
    <reaction evidence="41">
        <text>1,2-dihexadecanoyl-sn-glycero-3-phosphocholine + H2O = 1,2-dihexadecanoyl-sn-glycerol + phosphocholine + H(+)</text>
        <dbReference type="Rhea" id="RHEA:45304"/>
        <dbReference type="ChEBI" id="CHEBI:15377"/>
        <dbReference type="ChEBI" id="CHEBI:15378"/>
        <dbReference type="ChEBI" id="CHEBI:72999"/>
        <dbReference type="ChEBI" id="CHEBI:82929"/>
        <dbReference type="ChEBI" id="CHEBI:295975"/>
    </reaction>
    <physiologicalReaction direction="left-to-right" evidence="71">
        <dbReference type="Rhea" id="RHEA:45305"/>
    </physiologicalReaction>
</comment>
<comment type="catalytic activity">
    <reaction evidence="41">
        <text>a 1,2-diacyl-sn-glycero-3-phosphocholine + H2O = phosphocholine + a 1,2-diacyl-sn-glycerol + H(+)</text>
        <dbReference type="Rhea" id="RHEA:10604"/>
        <dbReference type="ChEBI" id="CHEBI:15377"/>
        <dbReference type="ChEBI" id="CHEBI:15378"/>
        <dbReference type="ChEBI" id="CHEBI:17815"/>
        <dbReference type="ChEBI" id="CHEBI:57643"/>
        <dbReference type="ChEBI" id="CHEBI:295975"/>
        <dbReference type="EC" id="3.1.4.3"/>
    </reaction>
    <physiologicalReaction direction="left-to-right" evidence="71">
        <dbReference type="Rhea" id="RHEA:10605"/>
    </physiologicalReaction>
</comment>
<comment type="catalytic activity">
    <molecule>Sphingomyelin phosphodiesterase, processed form</molecule>
    <reaction evidence="33">
        <text>a sphingomyelin + H2O = phosphocholine + an N-acylsphing-4-enine + H(+)</text>
        <dbReference type="Rhea" id="RHEA:19253"/>
        <dbReference type="ChEBI" id="CHEBI:15377"/>
        <dbReference type="ChEBI" id="CHEBI:15378"/>
        <dbReference type="ChEBI" id="CHEBI:17636"/>
        <dbReference type="ChEBI" id="CHEBI:52639"/>
        <dbReference type="ChEBI" id="CHEBI:295975"/>
        <dbReference type="EC" id="3.1.4.12"/>
    </reaction>
    <physiologicalReaction direction="left-to-right" evidence="69">
        <dbReference type="Rhea" id="RHEA:19254"/>
    </physiologicalReaction>
</comment>
<comment type="cofactor">
    <cofactor evidence="56 61">
        <name>Zn(2+)</name>
        <dbReference type="ChEBI" id="CHEBI:29105"/>
    </cofactor>
    <text evidence="47 49 56 61">Binds 2 Zn(2+) ions per subunit (PubMed:27349982, PubMed:27725636).</text>
</comment>
<comment type="activity regulation">
    <text evidence="35 41 50">Hydrolysis of liposomal sphingomyelin is stimulated by incorporation of diacylglycerol (DAG), ceramide and free fatty acids into the liposomal membranes (PubMed:25339683). Phosphatidylcholine hydrolysis is inhibited by incorporation of cholesterol, ceramide, DAG, monoacylglycerol and fatty acids (PubMed:25339683). Antidepressants, namely amitriptyline, imipramine, desipramine, fluoxetine, sertraline, escitalopram, and maprotiline inhibit sphingomyelin phosphodiesterase activity (PubMed:22573858, PubMed:33163980).</text>
</comment>
<comment type="activity regulation">
    <text evidence="6">(Microbial infection) The secretory form is activated by P.aeruginosa, this activation results in the release of ceramide in the outer leaflet of the plasma membrane.</text>
</comment>
<comment type="activity regulation">
    <text evidence="50">(Microbial infection) The secretory form is activated by human coronavirus SARS-CoV-2, this activation results in the release of ceramide in the outer leaflet of the plasma membrane.</text>
</comment>
<comment type="subunit">
    <text evidence="18 47">Monomer. Interacts with SORT1; the interaction is required for SMPD1 targeting to lysosomes (PubMed:16787399).</text>
</comment>
<comment type="interaction">
    <interactant intactId="EBI-7095800">
        <id>P17405</id>
    </interactant>
    <interactant intactId="EBI-523958">
        <id>P55210</id>
        <label>CASP7</label>
    </interactant>
    <organismsDiffer>false</organismsDiffer>
    <experiments>6</experiments>
</comment>
<comment type="subcellular location">
    <subcellularLocation>
        <location evidence="18 24 30 31 48 61">Lysosome</location>
    </subcellularLocation>
    <subcellularLocation>
        <location evidence="41">Lipid droplet</location>
    </subcellularLocation>
    <subcellularLocation>
        <location evidence="6 18 20 30 31 35 48 56 58 61">Secreted</location>
    </subcellularLocation>
    <text evidence="6 20 30 31 35">The secreted form is induced in a time- and dose-dependent by IL1B and TNF as well as stress and viral infection. This increase of the secreted form seems to be due to exocytosis of the lysosomal form and is Ca(2+)-dependent (PubMed:20530211, PubMed:20807762, PubMed:22573858). Secretion is dependent of phosphorylation at Ser-510 (PubMed:17303575). Secretion is induced by inflammatory mediators such as IL1B, IFNG or TNF as well as infection with bacteria and viruses (PubMed:12563314, PubMed:20807762).</text>
</comment>
<comment type="subcellular location">
    <molecule>Sphingomyelin phosphodiesterase, processed form</molecule>
    <subcellularLocation>
        <location evidence="1">Secreted</location>
        <location evidence="1">Extracellular space</location>
    </subcellularLocation>
    <text evidence="1">This form is generated following cleavage by CASP7.</text>
</comment>
<comment type="alternative products">
    <event type="alternative splicing"/>
    <isoform>
        <id>P17405-1</id>
        <name>1</name>
        <name>ASM-1</name>
        <sequence type="displayed"/>
    </isoform>
    <isoform>
        <id>P17405-2</id>
        <name>2</name>
        <name>ASM-2</name>
        <sequence type="described" ref="VSP_000331 VSP_000332"/>
    </isoform>
    <isoform>
        <id>P17405-3</id>
        <name>3</name>
        <name>ASM-3</name>
        <sequence type="described" ref="VSP_000333"/>
    </isoform>
    <isoform>
        <id>P17405-4</id>
        <name>4</name>
        <sequence type="described" ref="VSP_046964"/>
    </isoform>
</comment>
<comment type="PTM">
    <text evidence="32 58">Proteolytically processed (PubMed:21098024, PubMed:9030779). Mature lysosomal form arises from C-terminal proteolytic processing of pro-sphingomyelin phosphodiesterase (PubMed:21098024).</text>
</comment>
<comment type="PTM">
    <molecule>Sphingomyelin phosphodiesterase, processed form</molecule>
    <text evidence="1 33">This form is generated following cleavage by CASP7 in the extracellular milieu (PubMed:21157428). It shows increased activity (By similarity).</text>
</comment>
<comment type="PTM">
    <text evidence="31 58">Both lysosomal and secreted forms are glycosylated but they show a differential pattern of glycosylation.</text>
</comment>
<comment type="PTM">
    <text evidence="20 31 58">Phosphorylated at Ser-510 by PRKCD upon stress stimuli. Phosphorylation is required for secretion.</text>
</comment>
<comment type="polymorphism">
    <text evidence="22">A common polymorphism arises from a variable number of hexanucleotide repeat sequence within the signal peptide region.</text>
</comment>
<comment type="disease" evidence="5 10 12 14 16 19 24 27 28 29 37 38 40 45 46 54 55 59 61">
    <disease id="DI-02053">
        <name>Niemann-Pick disease A</name>
        <acronym>NPDA</acronym>
        <description>An early-onset lysosomal storage disorder caused by failure to hydrolyze sphingomyelin to ceramide. It results in the accumulation of sphingomyelin and other metabolically related lipids in reticuloendothelial and other cell types throughout the body, leading to cell death. Niemann-Pick disease type A is a primarily neurodegenerative disorder characterized by onset within the first year of life, intellectual disability, digestive disorders, failure to thrive, major hepatosplenomegaly, and severe neurologic symptoms. The severe neurological disorders and pulmonary infections lead to an early death, often around the age of four. Clinical features are variable. A phenotypic continuum exists between type A (basic neurovisceral) and type B (purely visceral) forms of Niemann-Pick disease, and the intermediate types encompass a cluster of variants combining clinical features of both types A and B.</description>
        <dbReference type="MIM" id="257200"/>
    </disease>
    <text>The disease is caused by variants affecting the gene represented in this entry.</text>
</comment>
<comment type="disease" evidence="4 5 9 13 15 16 17 24 25 26 27 29 32 34 36 37 38 39 43 44 45 46 48 51 53">
    <disease id="DI-02054">
        <name>Niemann-Pick disease B</name>
        <acronym>NPDB</acronym>
        <description>A late-onset lysosomal storage disorder caused by failure to hydrolyze sphingomyelin to ceramide. It results in the accumulation of sphingomyelin and other metabolically related lipids in reticuloendothelial and other cell types throughout the body, leading to cell death. Clinical signs involve only visceral organs. The most constant sign is hepatosplenomegaly which can be associated with pulmonary symptoms. Patients remain free of neurologic manifestations. However, a phenotypic continuum exists between type A (basic neurovisceral) and type B (purely visceral) forms of Niemann-Pick disease, and the intermediate types encompass a cluster of variants combining clinical features of both types A and B. In Niemann-Pick disease type B, onset of the first symptoms occurs in early childhood and patients can survive into adulthood.</description>
        <dbReference type="MIM" id="607616"/>
    </disease>
    <text>The disease is caused by variants affecting the gene represented in this entry.</text>
</comment>
<comment type="miscellaneous">
    <text>There are two types of sphingomyelinases: ASM (acid), and NSM (neutral).</text>
</comment>
<comment type="miscellaneous">
    <molecule>Isoform 1</molecule>
    <text>Most abundant (90%).</text>
</comment>
<comment type="miscellaneous">
    <molecule>Isoform 2</molecule>
    <text evidence="66">Intermediate abundance (10%).</text>
</comment>
<comment type="miscellaneous">
    <molecule>Isoform 3</molecule>
    <text evidence="66">Low abundance (&lt;1%).</text>
</comment>
<comment type="similarity">
    <text evidence="66">Belongs to the acid sphingomyelinase family.</text>
</comment>
<comment type="caution">
    <text evidence="4 12 39">Variants Gln-294 and Val-485 have been originally reported as disease-causing mutations in NPDA and NPDB (PubMed:12369017, PubMed:15221801). These variants have been reclassified as benign polymorphisms (PubMed:23430512).</text>
</comment>
<comment type="online information" name="Mendelian genes sphingomyelin phosphodiesterase 1, acid lysosomal (SMPD1)">
    <link uri="https://databases.lovd.nl/shared/genes/SMPD1"/>
    <text>Leiden Open Variation Database (LOVD)</text>
</comment>
<reference key="1">
    <citation type="journal article" date="1991" name="J. Biol. Chem.">
        <title>Human acid sphingomyelinase. Isolation, nucleotide sequence and expression of the full-length and alternatively spliced cDNAs.</title>
        <authorList>
            <person name="Schuchman E.H."/>
            <person name="Suchi M."/>
            <person name="Takahashi T."/>
            <person name="Sandhoff K."/>
            <person name="Desnick R.J."/>
        </authorList>
    </citation>
    <scope>NUCLEOTIDE SEQUENCE [MRNA]</scope>
    <scope>FUNCTION</scope>
    <scope>CATALYTIC ACTIVITY</scope>
    <scope>ALTERNATIVE SPLICING</scope>
    <scope>VARIANTS 48-ALA-LEU-49 DEL; ILE-324 AND ARG-508</scope>
</reference>
<reference key="2">
    <citation type="journal article" date="1992" name="Biol. Chem. Hoppe-Seyler">
        <title>Molecular cloning of the acid sphingomyelinase of the mouse and the organization and complete nucleotide sequence of the gene.</title>
        <authorList>
            <person name="Newrzella D."/>
            <person name="Stoffel W."/>
        </authorList>
    </citation>
    <scope>NUCLEOTIDE SEQUENCE [GENOMIC DNA]</scope>
    <scope>VARIANTS 48-ALA-LEU-49 DEL AND ARG-508</scope>
</reference>
<reference key="3">
    <citation type="journal article" date="1992" name="Genomics">
        <title>Structural organization and complete nucleotide sequence of the gene encoding human acid sphingomyelinase (SMPD1).</title>
        <authorList>
            <person name="Schuchman E.H."/>
            <person name="Levran O."/>
            <person name="Pereira L.V."/>
            <person name="Desnick R.J."/>
        </authorList>
    </citation>
    <scope>NUCLEOTIDE SEQUENCE [GENOMIC DNA]</scope>
    <scope>VARIANTS 36-VAL--LEU-39 DEL AND ALA-36</scope>
</reference>
<reference key="4">
    <citation type="journal article" date="1993" name="J. Biochem.">
        <title>Cloning of a human acid sphingomyelinase cDNA with a new mutation that renders the enzyme inactive.</title>
        <authorList>
            <person name="Ida H."/>
            <person name="Rennert O.M."/>
            <person name="Eto Y."/>
            <person name="Chan W.Y."/>
        </authorList>
    </citation>
    <scope>NUCLEOTIDE SEQUENCE [MRNA]</scope>
    <scope>VARIANTS 36-VAL--LEU-39 DEL; 48-ALA-LEU-49 DEL AND ARG-159</scope>
</reference>
<reference key="5">
    <citation type="journal article" date="2004" name="Nat. Genet.">
        <title>Complete sequencing and characterization of 21,243 full-length human cDNAs.</title>
        <authorList>
            <person name="Ota T."/>
            <person name="Suzuki Y."/>
            <person name="Nishikawa T."/>
            <person name="Otsuki T."/>
            <person name="Sugiyama T."/>
            <person name="Irie R."/>
            <person name="Wakamatsu A."/>
            <person name="Hayashi K."/>
            <person name="Sato H."/>
            <person name="Nagai K."/>
            <person name="Kimura K."/>
            <person name="Makita H."/>
            <person name="Sekine M."/>
            <person name="Obayashi M."/>
            <person name="Nishi T."/>
            <person name="Shibahara T."/>
            <person name="Tanaka T."/>
            <person name="Ishii S."/>
            <person name="Yamamoto J."/>
            <person name="Saito K."/>
            <person name="Kawai Y."/>
            <person name="Isono Y."/>
            <person name="Nakamura Y."/>
            <person name="Nagahari K."/>
            <person name="Murakami K."/>
            <person name="Yasuda T."/>
            <person name="Iwayanagi T."/>
            <person name="Wagatsuma M."/>
            <person name="Shiratori A."/>
            <person name="Sudo H."/>
            <person name="Hosoiri T."/>
            <person name="Kaku Y."/>
            <person name="Kodaira H."/>
            <person name="Kondo H."/>
            <person name="Sugawara M."/>
            <person name="Takahashi M."/>
            <person name="Kanda K."/>
            <person name="Yokoi T."/>
            <person name="Furuya T."/>
            <person name="Kikkawa E."/>
            <person name="Omura Y."/>
            <person name="Abe K."/>
            <person name="Kamihara K."/>
            <person name="Katsuta N."/>
            <person name="Sato K."/>
            <person name="Tanikawa M."/>
            <person name="Yamazaki M."/>
            <person name="Ninomiya K."/>
            <person name="Ishibashi T."/>
            <person name="Yamashita H."/>
            <person name="Murakawa K."/>
            <person name="Fujimori K."/>
            <person name="Tanai H."/>
            <person name="Kimata M."/>
            <person name="Watanabe M."/>
            <person name="Hiraoka S."/>
            <person name="Chiba Y."/>
            <person name="Ishida S."/>
            <person name="Ono Y."/>
            <person name="Takiguchi S."/>
            <person name="Watanabe S."/>
            <person name="Yosida M."/>
            <person name="Hotuta T."/>
            <person name="Kusano J."/>
            <person name="Kanehori K."/>
            <person name="Takahashi-Fujii A."/>
            <person name="Hara H."/>
            <person name="Tanase T.-O."/>
            <person name="Nomura Y."/>
            <person name="Togiya S."/>
            <person name="Komai F."/>
            <person name="Hara R."/>
            <person name="Takeuchi K."/>
            <person name="Arita M."/>
            <person name="Imose N."/>
            <person name="Musashino K."/>
            <person name="Yuuki H."/>
            <person name="Oshima A."/>
            <person name="Sasaki N."/>
            <person name="Aotsuka S."/>
            <person name="Yoshikawa Y."/>
            <person name="Matsunawa H."/>
            <person name="Ichihara T."/>
            <person name="Shiohata N."/>
            <person name="Sano S."/>
            <person name="Moriya S."/>
            <person name="Momiyama H."/>
            <person name="Satoh N."/>
            <person name="Takami S."/>
            <person name="Terashima Y."/>
            <person name="Suzuki O."/>
            <person name="Nakagawa S."/>
            <person name="Senoh A."/>
            <person name="Mizoguchi H."/>
            <person name="Goto Y."/>
            <person name="Shimizu F."/>
            <person name="Wakebe H."/>
            <person name="Hishigaki H."/>
            <person name="Watanabe T."/>
            <person name="Sugiyama A."/>
            <person name="Takemoto M."/>
            <person name="Kawakami B."/>
            <person name="Yamazaki M."/>
            <person name="Watanabe K."/>
            <person name="Kumagai A."/>
            <person name="Itakura S."/>
            <person name="Fukuzumi Y."/>
            <person name="Fujimori Y."/>
            <person name="Komiyama M."/>
            <person name="Tashiro H."/>
            <person name="Tanigami A."/>
            <person name="Fujiwara T."/>
            <person name="Ono T."/>
            <person name="Yamada K."/>
            <person name="Fujii Y."/>
            <person name="Ozaki K."/>
            <person name="Hirao M."/>
            <person name="Ohmori Y."/>
            <person name="Kawabata A."/>
            <person name="Hikiji T."/>
            <person name="Kobatake N."/>
            <person name="Inagaki H."/>
            <person name="Ikema Y."/>
            <person name="Okamoto S."/>
            <person name="Okitani R."/>
            <person name="Kawakami T."/>
            <person name="Noguchi S."/>
            <person name="Itoh T."/>
            <person name="Shigeta K."/>
            <person name="Senba T."/>
            <person name="Matsumura K."/>
            <person name="Nakajima Y."/>
            <person name="Mizuno T."/>
            <person name="Morinaga M."/>
            <person name="Sasaki M."/>
            <person name="Togashi T."/>
            <person name="Oyama M."/>
            <person name="Hata H."/>
            <person name="Watanabe M."/>
            <person name="Komatsu T."/>
            <person name="Mizushima-Sugano J."/>
            <person name="Satoh T."/>
            <person name="Shirai Y."/>
            <person name="Takahashi Y."/>
            <person name="Nakagawa K."/>
            <person name="Okumura K."/>
            <person name="Nagase T."/>
            <person name="Nomura N."/>
            <person name="Kikuchi H."/>
            <person name="Masuho Y."/>
            <person name="Yamashita R."/>
            <person name="Nakai K."/>
            <person name="Yada T."/>
            <person name="Nakamura Y."/>
            <person name="Ohara O."/>
            <person name="Isogai T."/>
            <person name="Sugano S."/>
        </authorList>
    </citation>
    <scope>NUCLEOTIDE SEQUENCE [LARGE SCALE MRNA] (ISOFORM 4)</scope>
    <scope>VARIANTS 48-ALA-LEU-49 DEL AND ARG-508</scope>
    <source>
        <tissue>Testis</tissue>
    </source>
</reference>
<reference key="6">
    <citation type="journal article" date="2006" name="Nature">
        <title>Human chromosome 11 DNA sequence and analysis including novel gene identification.</title>
        <authorList>
            <person name="Taylor T.D."/>
            <person name="Noguchi H."/>
            <person name="Totoki Y."/>
            <person name="Toyoda A."/>
            <person name="Kuroki Y."/>
            <person name="Dewar K."/>
            <person name="Lloyd C."/>
            <person name="Itoh T."/>
            <person name="Takeda T."/>
            <person name="Kim D.-W."/>
            <person name="She X."/>
            <person name="Barlow K.F."/>
            <person name="Bloom T."/>
            <person name="Bruford E."/>
            <person name="Chang J.L."/>
            <person name="Cuomo C.A."/>
            <person name="Eichler E."/>
            <person name="FitzGerald M.G."/>
            <person name="Jaffe D.B."/>
            <person name="LaButti K."/>
            <person name="Nicol R."/>
            <person name="Park H.-S."/>
            <person name="Seaman C."/>
            <person name="Sougnez C."/>
            <person name="Yang X."/>
            <person name="Zimmer A.R."/>
            <person name="Zody M.C."/>
            <person name="Birren B.W."/>
            <person name="Nusbaum C."/>
            <person name="Fujiyama A."/>
            <person name="Hattori M."/>
            <person name="Rogers J."/>
            <person name="Lander E.S."/>
            <person name="Sakaki Y."/>
        </authorList>
    </citation>
    <scope>NUCLEOTIDE SEQUENCE [LARGE SCALE GENOMIC DNA]</scope>
</reference>
<reference key="7">
    <citation type="journal article" date="1989" name="EMBO J.">
        <title>Isolation of cDNA clones encoding human acid sphingomyelinase: occurrence of alternatively processed transcripts.</title>
        <authorList>
            <person name="Quintern L.E."/>
            <person name="Schuchman E.H."/>
            <person name="Levran O."/>
            <person name="Suchi M."/>
            <person name="Ferlinz K."/>
            <person name="Reinke H."/>
            <person name="Sandhoff K."/>
            <person name="Desnick R.J."/>
        </authorList>
    </citation>
    <scope>NUCLEOTIDE SEQUENCE [GENOMIC DNA] OF 130-631</scope>
    <scope>PARTIAL PROTEIN SEQUENCE</scope>
    <scope>ALTERNATIVE SPLICING</scope>
    <scope>VARIANTS ILE-324 AND ARG-508</scope>
    <source>
        <tissue>Fibroblast</tissue>
    </source>
</reference>
<reference key="8">
    <citation type="journal article" date="1996" name="Cell">
        <title>Acid sphingomyelinase-deficient human lymphoblasts and mice are defective in radiation-induced apoptosis.</title>
        <authorList>
            <person name="Santana P."/>
            <person name="Pena L.A."/>
            <person name="Haimovitz-Friedman A."/>
            <person name="Martin S."/>
            <person name="Green D."/>
            <person name="McLoughlin M."/>
            <person name="Cordon-Cardo C."/>
            <person name="Schuchman E.H."/>
            <person name="Fuks Z."/>
            <person name="Kolesnick R."/>
        </authorList>
    </citation>
    <scope>FUNCTION</scope>
    <scope>CATALYTIC ACTIVITY</scope>
</reference>
<reference key="9">
    <citation type="journal article" date="1996" name="J. Biol. Chem.">
        <title>Zn2+-stimulated sphingomyelinase is secreted by many cell types and is a product of the acid sphingomyelinase gene.</title>
        <authorList>
            <person name="Schissel S.L."/>
            <person name="Schuchman E.H."/>
            <person name="Williams K.J."/>
            <person name="Tabas I."/>
        </authorList>
    </citation>
    <scope>CATALYTIC ACTIVITY</scope>
    <scope>COFACTOR</scope>
    <scope>SUBCELLULAR LOCATION</scope>
</reference>
<reference key="10">
    <citation type="journal article" date="1997" name="Eur. J. Biochem.">
        <title>Functional characterization of the N-glycosylation sites of human acid sphingomyelinase by site-directed mutagenesis.</title>
        <authorList>
            <person name="Ferlinz K."/>
            <person name="Hurwitz R."/>
            <person name="Moczall H."/>
            <person name="Lansmann S."/>
            <person name="Schuchman E.H."/>
            <person name="Sandhoff K."/>
        </authorList>
    </citation>
    <scope>GLYCOSYLATION AT ASN-88; ASN-177; ASN-337; ASN-397 AND ASN-522</scope>
    <scope>MUTAGENESIS OF ASN-88; ASN-177; ASN-337; ASN-397; ASN-505 AND ASN-522</scope>
    <scope>SUBCELLULAR LOCATION</scope>
    <scope>PROTEOLYTIC CLEAVAGE</scope>
    <scope>PHOSPHORYLATION</scope>
</reference>
<reference key="11">
    <citation type="journal article" date="1997" name="Cell">
        <title>Acidic sphingomyelinase mediates entry of N. gonorrhoeae into nonphagocytic cells.</title>
        <authorList>
            <person name="Grassme H."/>
            <person name="Gulbins E."/>
            <person name="Brenner B."/>
            <person name="Ferlinz K."/>
            <person name="Sandhoff K."/>
            <person name="Harzer K."/>
            <person name="Lang F."/>
            <person name="Meyer T.F."/>
        </authorList>
    </citation>
    <scope>FUNCTION</scope>
    <scope>FUNCTION (MICROBIAL INFECTION)</scope>
</reference>
<reference key="12">
    <citation type="journal article" date="2003" name="Eur. J. Biochem.">
        <title>Human acid sphingomyelinase.</title>
        <authorList>
            <person name="Lansmann S."/>
            <person name="Schuette C.G."/>
            <person name="Bartelsen O."/>
            <person name="Hoernschemeyer J."/>
            <person name="Linke T."/>
            <person name="Weisgerber J."/>
            <person name="Sandhoff K."/>
        </authorList>
    </citation>
    <scope>DISULFIDE BONDS</scope>
    <scope>IDENTIFICATION BY MASS SPECTROMETRY</scope>
</reference>
<reference key="13">
    <citation type="journal article" date="2003" name="Nat. Med.">
        <title>Host defense against Pseudomonas aeruginosa requires ceramide-rich membrane rafts.</title>
        <authorList>
            <person name="Grassme H."/>
            <person name="Jendrossek V."/>
            <person name="Riehle A."/>
            <person name="von Kuerthy G."/>
            <person name="Berger J."/>
            <person name="Schwarz H."/>
            <person name="Weller M."/>
            <person name="Kolesnick R."/>
            <person name="Gulbins E."/>
        </authorList>
    </citation>
    <scope>FUNCTION</scope>
    <scope>SUBCELLULAR LOCATION</scope>
    <scope>ACTIVITY REGULATION (MICROBIAL INFECTION)</scope>
    <scope>CATALYTIC ACTIVITY</scope>
</reference>
<reference key="14">
    <citation type="journal article" date="2006" name="Traffic">
        <title>The lysosomal trafficking of acid sphingomyelinase is mediated by sortilin and mannose 6-phosphate receptor.</title>
        <authorList>
            <person name="Ni X."/>
            <person name="Morales C.R."/>
        </authorList>
    </citation>
    <scope>SUBCELLULAR LOCATION</scope>
    <scope>FUNCTION</scope>
    <scope>INTERACTION WITH SORT1</scope>
</reference>
<reference key="15">
    <citation type="journal article" date="2007" name="BMC Med. Genet.">
        <title>Sphingomyelin phosphodiesterase-1 (SMPD1) coding variants do not contribute to low levels of high-density lipoprotein cholesterol.</title>
        <authorList>
            <person name="Dastani Z."/>
            <person name="Ruel I.L."/>
            <person name="Engert J.C."/>
            <person name="Genest J. Jr."/>
            <person name="Marcil M."/>
        </authorList>
    </citation>
    <scope>POLYMORPHISM</scope>
</reference>
<reference key="16">
    <citation type="journal article" date="2007" name="J. Biol. Chem.">
        <title>Activation of acid sphingomyelinase by protein kinase Cdelta-mediated phosphorylation.</title>
        <authorList>
            <person name="Zeidan Y.H."/>
            <person name="Hannun Y.A."/>
        </authorList>
    </citation>
    <scope>FUNCTION</scope>
    <scope>PHOSPHORYLATION AT SER-510</scope>
    <scope>CATALYTIC ACTIVITY</scope>
    <scope>SUBCELLULAR LOCATION</scope>
    <scope>MUTAGENESIS OF SER-151; SER-233; SER-250 AND SER-510</scope>
</reference>
<reference key="17">
    <citation type="journal article" date="2010" name="J. Biol. Chem.">
        <title>Regulated secretion of acid sphingomyelinase: implications for selectivity of ceramide formation.</title>
        <authorList>
            <person name="Jenkins R.W."/>
            <person name="Canals D."/>
            <person name="Idkowiak-Baldys J."/>
            <person name="Simbari F."/>
            <person name="Roddy P."/>
            <person name="Perry D.M."/>
            <person name="Kitatani K."/>
            <person name="Luberto C."/>
            <person name="Hannun Y.A."/>
        </authorList>
    </citation>
    <scope>FUNCTION</scope>
    <scope>CATALYTIC ACTIVITY</scope>
    <scope>SUBCELLULAR LOCATION</scope>
    <scope>GLYCOSYLATION</scope>
    <scope>MUTAGENESIS OF SER-510</scope>
</reference>
<reference key="18">
    <citation type="journal article" date="2010" name="J. Cell Biol.">
        <title>Exocytosis of acid sphingomyelinase by wounded cells promotes endocytosis and plasma membrane repair.</title>
        <authorList>
            <person name="Tam C."/>
            <person name="Idone V."/>
            <person name="Devlin C."/>
            <person name="Fernandes M.C."/>
            <person name="Flannery A."/>
            <person name="He X."/>
            <person name="Schuchman E."/>
            <person name="Tabas I."/>
            <person name="Andrews N.W."/>
        </authorList>
    </citation>
    <scope>FUNCTION</scope>
    <scope>CATALYTIC ACTIVITY</scope>
    <scope>SUBCELLULAR LOCATION</scope>
</reference>
<reference key="19">
    <citation type="journal article" date="2011" name="EMBO J.">
        <title>Caspase-8 and caspase-7 sequentially mediate proteolytic activation of acid sphingomyelinase in TNF-R1 receptosomes.</title>
        <authorList>
            <person name="Edelmann B."/>
            <person name="Bertsch U."/>
            <person name="Tchikov V."/>
            <person name="Winoto-Morbach S."/>
            <person name="Perrotta C."/>
            <person name="Jakob M."/>
            <person name="Adam-Klages S."/>
            <person name="Kabelitz D."/>
            <person name="Schuetze S."/>
        </authorList>
    </citation>
    <scope>FUNCTION</scope>
    <scope>CATALYTIC ACTIVITY</scope>
    <scope>MUTAGENESIS OF ASP-225 AND ASP-253</scope>
</reference>
<reference key="20">
    <citation type="journal article" date="2012" name="J. Virol.">
        <title>Ebolavirus requires acid sphingomyelinase activity and plasma membrane sphingomyelin for infection.</title>
        <authorList>
            <person name="Miller M.E."/>
            <person name="Adhikary S."/>
            <person name="Kolokoltsov A.A."/>
            <person name="Davey R.A."/>
        </authorList>
    </citation>
    <scope>FUNCTION (MICROBIAL INFECTION)</scope>
    <scope>SUBCELLULAR LOCATION</scope>
    <scope>CATALYTIC ACTIVITY</scope>
    <scope>ACTIVITY REGULATION</scope>
</reference>
<reference key="21">
    <citation type="journal article" date="2014" name="J. Lipid Res.">
        <title>Acid sphingomyelinase activity is regulated by membrane lipids and facilitates cholesterol transfer by NPC2.</title>
        <authorList>
            <person name="Oninla V.O."/>
            <person name="Breiden B."/>
            <person name="Babalola J.O."/>
            <person name="Sandhoff K."/>
        </authorList>
    </citation>
    <scope>FUNCTION</scope>
    <scope>CATALYTIC ACTIVITY</scope>
    <scope>ACTIVITY REGULATION</scope>
    <scope>SUBCELLULAR LOCATION</scope>
</reference>
<reference key="22">
    <citation type="journal article" date="2019" name="Cell. Microbiol.">
        <title>Solving the secretory acid sphingomyelinase puzzle: Insights from lysosome-mediated parasite invasion and plasma membrane repair.</title>
        <authorList>
            <person name="Andrews N.W."/>
        </authorList>
    </citation>
    <scope>REVIEW OF FUNCTION AND SUBCELLULAR LOCATION</scope>
</reference>
<reference key="23">
    <citation type="journal article" date="2020" name="Cell Rep.">
        <title>Pharmacological Inhibition of Acid Sphingomyelinase Prevents Uptake of SARS-CoV-2 by Epithelial Cells.</title>
        <authorList>
            <person name="Carpinteiro A."/>
            <person name="Edwards M.J."/>
            <person name="Hoffmann M."/>
            <person name="Kochs G."/>
            <person name="Gripp B."/>
            <person name="Weigang S."/>
            <person name="Adams C."/>
            <person name="Carpinteiro E."/>
            <person name="Gulbins A."/>
            <person name="Keitsch S."/>
            <person name="Sehl C."/>
            <person name="Soddemann M."/>
            <person name="Wilker B."/>
            <person name="Kamler M."/>
            <person name="Bertsch T."/>
            <person name="Lang K.S."/>
            <person name="Patel S."/>
            <person name="Wilson G.C."/>
            <person name="Walter S."/>
            <person name="Hengel H."/>
            <person name="Poehlmann S."/>
            <person name="Lang P.A."/>
            <person name="Kornhuber J."/>
            <person name="Becker K.A."/>
            <person name="Ahmad S.A."/>
            <person name="Fassbender K."/>
            <person name="Gulbins E."/>
        </authorList>
    </citation>
    <scope>FUNCTION (MICROBIAL INFECTION)</scope>
    <scope>ACTIVITY REGULATION</scope>
    <scope>CATALYTIC ACTIVITY</scope>
</reference>
<reference key="24">
    <citation type="journal article" date="2016" name="J. Mol. Biol.">
        <title>Structure of human acid sphingomyelinase reveals the role of the saposin domain in activating substrate hydrolysis.</title>
        <authorList>
            <person name="Xiong Z.J."/>
            <person name="Huang J."/>
            <person name="Poda G."/>
            <person name="Pomes R."/>
            <person name="Prive G.G."/>
        </authorList>
    </citation>
    <scope>X-RAY CRYSTALLOGRAPHY (2.80 ANGSTROMS) OF 47-629 OF MUTANT SER-631 IN COMPLEX WITH ZINC</scope>
    <scope>CATALYTIC ACTIVITY</scope>
    <scope>GLYCOSYLATION AT ASN-88; ASN-177; ASN-337; ASN-397; ASN-505 AND ASN-522</scope>
    <scope>DISULFIDE BONDS</scope>
    <scope>SUBUNIT</scope>
</reference>
<reference key="25">
    <citation type="journal article" date="2016" name="Nat. Commun.">
        <title>Human acid sphingomyelinase structures provide insight to molecular basis of Niemann-Pick disease.</title>
        <authorList>
            <person name="Zhou Y.F."/>
            <person name="Metcalf M.C."/>
            <person name="Garman S.C."/>
            <person name="Edmunds T."/>
            <person name="Qiu H."/>
            <person name="Wei R.R."/>
        </authorList>
    </citation>
    <scope>X-RAY CRYSTALLOGRAPHY (2.25 ANGSTROMS) OF 47-629 OF APOENZYME AND IN COMPLEX WITH PHOSPHOCHOLINE AND ZINC</scope>
    <scope>COFACTOR</scope>
    <scope>GLYCOSYLATION AT ASN-88; ASN-177; ASN-337; ASN-397; ASN-505 AND ASN-522</scope>
</reference>
<reference key="26">
    <citation type="journal article" date="1991" name="Biochem. Biophys. Res. Commun.">
        <title>Molecular basis of acid sphingomyelinase deficiency in a patient with Niemann-Pick disease type A.</title>
        <authorList>
            <person name="Ferlinz K."/>
            <person name="Hurwitz R."/>
            <person name="Sandhoff K."/>
        </authorList>
    </citation>
    <scope>VARIANT NPDA SER-579</scope>
    <scope>CHARACTERIZATION OF VARIANT NPDA SER-579</scope>
    <scope>CATALYTIC ACTIVITY</scope>
</reference>
<reference key="27">
    <citation type="journal article" date="1991" name="Proc. Natl. Acad. Sci. U.S.A.">
        <title>Niemann-Pick disease: a frequent missense mutation in the acid sphingomyelinase gene of Ashkenazi Jewish type A and B patients.</title>
        <authorList>
            <person name="Levran O."/>
            <person name="Desnick R.J."/>
            <person name="Schuchman E.H."/>
        </authorList>
    </citation>
    <scope>VARIANT NPDA LEU-498</scope>
</reference>
<reference key="28">
    <citation type="journal article" date="1991" name="J. Clin. Invest.">
        <title>Niemann-Pick type B disease. Identification of a single codon deletion in the acid sphingomyelinase gene and genotype/phenotype correlations in type A and B patients.</title>
        <authorList>
            <person name="Levran O."/>
            <person name="Desnick R.J."/>
            <person name="Schuchman E.H."/>
        </authorList>
    </citation>
    <scope>VARIANT NPDB ARG-610 DEL</scope>
</reference>
<reference key="29">
    <citation type="journal article" date="1992" name="Blood">
        <title>Identification and expression of a common missense mutation (L302P) in the acid sphingomyelinase gene of Ashkenazi Jewish type A Niemann-Pick disease patients.</title>
        <authorList>
            <person name="Levran O."/>
            <person name="Desnick R.J."/>
            <person name="Schuchman E.H."/>
        </authorList>
    </citation>
    <scope>VARIANT NPDA PRO-304</scope>
</reference>
<reference key="30">
    <citation type="journal article" date="1992" name="Hum. Mutat.">
        <title>Identification of a missense mutation (S436R) in the acid sphingomyelinase gene from a Japanese patient with type B Niemann-Pick disease.</title>
        <authorList>
            <person name="Takahashi T."/>
            <person name="Desnick R.J."/>
            <person name="Takada G."/>
            <person name="Schuchman E.H."/>
        </authorList>
    </citation>
    <scope>VARIANT NPDB ARG-438</scope>
</reference>
<reference key="31">
    <citation type="journal article" date="1992" name="J. Biol. Chem.">
        <title>Identification and expression of five mutations in the human acid sphingomyelinase gene causing types A and B Niemann-Pick disease. Molecular evidence for genetic heterogeneity in the neuronopathic and non-neuronopathic forms.</title>
        <authorList>
            <person name="Takahashi T."/>
            <person name="Suchi M."/>
            <person name="Desnick R.J."/>
            <person name="Takada G."/>
            <person name="Schuchman E.H."/>
        </authorList>
    </citation>
    <scope>VARIANT NPDA ILE-384</scope>
    <scope>VARIANTS NPDB ARG-244 AND SER-385</scope>
</reference>
<reference key="32">
    <citation type="journal article" date="1994" name="J. Inherit. Metab. Dis.">
        <title>A family with visceral course of Niemann-Pick disease, macular halo syndrome and low sphingomyelin degradation rate.</title>
        <authorList>
            <person name="Sperl W."/>
            <person name="Bart G."/>
            <person name="Vanier M.T."/>
            <person name="Christomanou H."/>
            <person name="Baldissera I."/>
            <person name="Steichensdorf E."/>
            <person name="Paschke E."/>
        </authorList>
    </citation>
    <scope>VARIANT NPDB GLY-393</scope>
</reference>
<reference key="33">
    <citation type="journal article" date="1995" name="Hum. Mutat.">
        <title>Two new mutations in the acid sphingomyelinase gene causing type A Niemann-pick disease: N389T and R441X.</title>
        <authorList>
            <person name="Schuchman E.H."/>
        </authorList>
    </citation>
    <scope>VARIANT NPDA THR-391</scope>
</reference>
<reference key="34">
    <citation type="journal article" date="1995" name="Tohoku J. Exp. Med.">
        <title>Identification and expression of a missense mutation (Y446C) in the acid sphingomyelinase gene from a Japanese patient with type A Niemann-Pick disease.</title>
        <authorList>
            <person name="Takahashi T."/>
            <person name="Suchi M."/>
            <person name="Sato W."/>
            <person name="Ten S.B."/>
            <person name="Sakuragawa N."/>
            <person name="Desnick R.J."/>
            <person name="Schuchman E.H."/>
            <person name="Takada G."/>
        </authorList>
    </citation>
    <scope>VARIANT NPDA CYS-448</scope>
</reference>
<reference key="35">
    <citation type="journal article" date="1996" name="Hum. Mutat.">
        <title>Identification of three novel mutations in the acid sphingomyelinase gene of Japanese patients with Niemann-Pick disease type A and B.</title>
        <authorList>
            <person name="Ida H."/>
            <person name="Rennert O.M."/>
            <person name="Maekawa K."/>
            <person name="Eto Y."/>
        </authorList>
    </citation>
    <scope>VARIANT NPDB GLN-248</scope>
</reference>
<reference key="36">
    <citation type="journal article" date="1997" name="J. Inherit. Metab. Dis.">
        <title>Two novel mutations in patients with atypical phenotypes of acid sphingomyelinase deficiency.</title>
        <authorList>
            <person name="Pavluu H."/>
            <person name="Elleder M."/>
        </authorList>
    </citation>
    <scope>VARIANTS NPDA LYS-294 AND PRO-343</scope>
</reference>
<reference key="37">
    <citation type="journal article" date="1998" name="J. Biol. Chem.">
        <title>The cellular trafficking and zinc dependence of secretory and lysosomal sphingomyelinase, two products of the acid sphingomyelinase gene.</title>
        <authorList>
            <person name="Schissel S.L."/>
            <person name="Keesler G.A."/>
            <person name="Schuchman E.H."/>
            <person name="Williams K.J."/>
            <person name="Tabas I."/>
        </authorList>
    </citation>
    <scope>CHARACTERIZATION OF VARIANT NPDA LEU-498</scope>
    <scope>FUNCTION</scope>
    <scope>COFACTOR</scope>
</reference>
<reference key="38">
    <citation type="journal article" date="2002" name="Am. J. Hum. Genet.">
        <title>The demographics and distribution of type B Niemann-Pick disease: novel mutations lead to new genotype/phenotype correlations.</title>
        <authorList>
            <person name="Simonaro C.M."/>
            <person name="Desnick R.J."/>
            <person name="McGovern M.M."/>
            <person name="Wasserstein M.P."/>
            <person name="Schuchman E.H."/>
        </authorList>
    </citation>
    <scope>VARIANTS NPDB VAL-51; TRP-94; PRO-139; ARG-159; PRO-198; CYS-202; MET-227; CYS-230; ASP-234; SER-247; ARG-250; HIS-291; ALA-325; ARG-332; ASP-359; HIS-378; LEU-378; PRO-381; VAL-415; TYR-423; ARG-433; PRO-434; CYS-437; VAL-454; ASP-458; TRP-476; LEU-477; LEU-482; ASN-490; SER-496; CYS-498; GLN-516; VAL-517; ARG-535; PRO-551; ASN-578; HIS-602 AND PRO-602</scope>
    <scope>VARIANT VAL-487</scope>
</reference>
<reference key="39">
    <citation type="journal article" date="2003" name="Ann. Hum. Genet.">
        <title>Seven novel Acid sphingomyelinase gene mutations in Niemann-Pick type A and B patients.</title>
        <authorList>
            <person name="Sikora J."/>
            <person name="Pavluu-Pereira H."/>
            <person name="Elleder M."/>
            <person name="Roelofs H."/>
            <person name="Wevers R.A."/>
        </authorList>
    </citation>
    <scope>VARIANTS NPDA ARG-250; TYR-321; SER-465; LEU-477 AND HIS-539</scope>
    <scope>VARIANTS NPDB SER-373 AND ARG-610 DEL</scope>
</reference>
<reference key="40">
    <citation type="journal article" date="2004" name="Hum. Mutat.">
        <title>Screening of 25 Italian patients with Niemann-Pick A reveals fourteen new mutations, one common and thirteen private, in SMPD1.</title>
        <authorList>
            <person name="Ricci V."/>
            <person name="Stroppiano M."/>
            <person name="Corsolini F."/>
            <person name="Di Rocco M."/>
            <person name="Parenti G."/>
            <person name="Regis S."/>
            <person name="Grossi S."/>
            <person name="Biancheri R."/>
            <person name="Mazzotti R."/>
            <person name="Filocamo M."/>
        </authorList>
    </citation>
    <scope>VARIANTS NPDA PRO-105; SER-247; LYS-248; HIS-315; PRO-452; LEU-477; LEU-498; HIS-498 AND CYS-519</scope>
    <scope>VARIANT GLN-296</scope>
</reference>
<reference key="41">
    <citation type="journal article" date="2004" name="Hum. Mutat.">
        <title>Acid sphingomyelinase: identification of nine novel mutations among Italian Niemann Pick type B patients and characterization of in vivo functional in-frame start codon.</title>
        <authorList>
            <person name="Pittis M.G."/>
            <person name="Ricci V."/>
            <person name="Guerci V.I."/>
            <person name="Marcais C."/>
            <person name="Ciana G."/>
            <person name="Dardis A."/>
            <person name="Gerin F."/>
            <person name="Stroppiano M."/>
            <person name="Vanier M.T."/>
            <person name="Filocamo M."/>
            <person name="Bembi B."/>
        </authorList>
    </citation>
    <scope>VARIANTS NPDB PRO-105; PRO-227; CYS-246; THR-283; LYS-294 AND ILE-384</scope>
</reference>
<reference key="42">
    <citation type="journal article" date="2005" name="Hum. Mutat.">
        <title>Functional in vitro characterization of 14 SMPD1 mutations identified in Italian patients affected by Niemann Pick type B disease.</title>
        <authorList>
            <person name="Dardis A."/>
            <person name="Zampieri S."/>
            <person name="Filocamo M."/>
            <person name="Burlina A."/>
            <person name="Bembi B."/>
            <person name="Pittis M.G."/>
        </authorList>
    </citation>
    <scope>VARIANTS NPDB ALA-132 AND TYR-565</scope>
    <scope>CHARACTERIZATION OF VARIANTS NPDB PRO-105; ALA-132; PRO-227; CYS-246; THR-283; TYR-565; HIS-602 AND PRO-602</scope>
</reference>
<reference key="43">
    <citation type="journal article" date="2005" name="J. Inherit. Metab. Dis.">
        <title>Acid sphingomyelinase deficiency. Phenotype variability with prevalence of intermediate phenotype in a series of twenty-five Czech and Slovak patients. A multi-approach study.</title>
        <authorList>
            <person name="Pavluu-Pereira H."/>
            <person name="Asfaw B."/>
            <person name="Poupctova H."/>
            <person name="Ledvinova J."/>
            <person name="Sikora J."/>
            <person name="Vanier M.T."/>
            <person name="Sandhoff K."/>
            <person name="Zeman J."/>
            <person name="Novotna Z."/>
            <person name="Chudoba D."/>
            <person name="Elleder M."/>
        </authorList>
    </citation>
    <scope>VARIANTS NPDA ARG-168; LEU-186; HIS-230; VAL-243; ARG-250; GLU-253; ALA-280; HIS-291; LYS-294; PRO-343; HIS-378; TRP-476; ARG-535 AND SER-579</scope>
    <scope>VARIANT ARG-508</scope>
    <scope>CATALYTIC ACTIVITY</scope>
    <scope>CHARACTERIZATION OF VARIANTS NPDA LEU-186; GLU-253; ALA-280; LYS-294; PRO-343 AND HIS-378</scope>
</reference>
<reference key="44">
    <citation type="journal article" date="2006" name="Intern. Med. J.">
        <title>Clinical findings in Niemann-Pick disease type B.</title>
        <authorList>
            <person name="Muessig K."/>
            <person name="Harzer K."/>
            <person name="Mayrhofer H."/>
            <person name="Kraegeloh-Mann I."/>
            <person name="Haering H.-U."/>
            <person name="Machicao F."/>
        </authorList>
    </citation>
    <scope>VARIANTS NPDB ARG-168 AND ASN-178</scope>
    <scope>VARIANT GLY-507</scope>
</reference>
<reference key="45">
    <citation type="journal article" date="2008" name="Mol. Genet. Metab.">
        <title>Characterization of common SMPD1 mutations causing types A and B Niemann-Pick disease and generation of mutation-specific mouse models.</title>
        <authorList>
            <person name="Jones I."/>
            <person name="He X."/>
            <person name="Katouzian F."/>
            <person name="Darroch P.I."/>
            <person name="Schuchman E.H."/>
        </authorList>
    </citation>
    <scope>CHARACTERIZATION OF VARIANTS NPDA PRO-304 AND LEU-498</scope>
    <scope>CHARACTERIZATION OF VARIANTS NPDB TYR-423 AND ARG-610 DEL</scope>
    <scope>FUNCTION</scope>
    <scope>SUBCELLULAR LOCATION</scope>
    <scope>CATALYTIC ACTIVITY</scope>
</reference>
<reference key="46">
    <citation type="journal article" date="2009" name="Ann. Hematol.">
        <title>A novel missense mutation of the SMPD1 gene in a Taiwanese patient with type B Niemann-Pick disease.</title>
        <authorList>
            <person name="Lan M.Y."/>
            <person name="Lin S.J."/>
            <person name="Chen Y.F."/>
            <person name="Peng C.H."/>
            <person name="Liu Y.F."/>
        </authorList>
    </citation>
    <scope>VARIANTS NPDB ARG-332 AND ASP-453</scope>
</reference>
<reference key="47">
    <citation type="journal article" date="2009" name="Hum. Mutat.">
        <title>Identification and characterization of SMPD1 mutations causing Niemann-Pick types A and B in Spanish patients.</title>
        <authorList>
            <person name="Rodriguez-Pascau L."/>
            <person name="Gort L."/>
            <person name="Schuchman E.H."/>
            <person name="Vilageliu L."/>
            <person name="Grinberg D."/>
            <person name="Chabas A."/>
        </authorList>
    </citation>
    <scope>VARIANTS NPDA SER-247; CYS-369; PHE-392 DEL; ARG-423; SER-469; GLU-484 AND THR-594 DEL</scope>
    <scope>VARIANTS NPDB CYS-230; HIS-378; TRP-476; ALA-488 AND ARG-610 DEL</scope>
</reference>
<reference key="48">
    <citation type="journal article" date="2010" name="Mol. Med.">
        <title>Identification and characterization of eight novel SMPD1 mutations causing types A and B Niemann-Pick disease.</title>
        <authorList>
            <person name="Desnick J.P."/>
            <person name="Kim J."/>
            <person name="He X."/>
            <person name="Wasserstein M.P."/>
            <person name="Simonaro C.M."/>
            <person name="Schuchman E.H."/>
        </authorList>
    </citation>
    <scope>VARIANTS NPDA ARG-211 AND HIS-253</scope>
    <scope>VARIANTS NPDB MET-314; ARG-427 AND HIS-525</scope>
    <scope>CHARACTERIZATION OF VARIANTS NPDA ARG-211 AND HIS-253</scope>
    <scope>CHARACTERIZATION OF VARIANTS NPDB MET-314; ARG-427 AND HIS-525</scope>
</reference>
<reference key="49">
    <citation type="journal article" date="2011" name="J. Biol. Chem.">
        <title>A novel mechanism of lysosomal acid sphingomyelinase maturation: requirement for carboxyl-terminal proteolytic processing.</title>
        <authorList>
            <person name="Jenkins R.W."/>
            <person name="Idkowiak-Baldys J."/>
            <person name="Simbari F."/>
            <person name="Canals D."/>
            <person name="Roddy P."/>
            <person name="Riner C.D."/>
            <person name="Clarke C.J."/>
            <person name="Hannun Y.A."/>
        </authorList>
    </citation>
    <scope>CATALYTIC ACTIVITY</scope>
    <scope>FUNCTION</scope>
    <scope>SUBCELLULAR LOCATION</scope>
    <scope>CHARACTERIZATION OF VARIANTS NPDB HIS-602; PRO-602 AND ARG-610 DEL</scope>
</reference>
<reference key="50">
    <citation type="journal article" date="2011" name="Lancet">
        <title>PAS-positive macrophages--not always infection.</title>
        <authorList>
            <person name="Meersseman W."/>
            <person name="Verschueren P."/>
            <person name="Tousseyn T."/>
            <person name="De Vos R."/>
            <person name="Cassiman D."/>
        </authorList>
    </citation>
    <scope>VARIANT NPDB PRO-163</scope>
</reference>
<reference key="51">
    <citation type="journal article" date="2012" name="Chin. Med. J.">
        <title>A novel SMPD1 mutation in two Chinese sibling patients with type B Niemann-Pick disease.</title>
        <authorList>
            <person name="Hua R."/>
            <person name="Wu H."/>
            <person name="Cui Z."/>
            <person name="Chen J.X."/>
            <person name="Wang Z."/>
        </authorList>
    </citation>
    <scope>VARIANT NPDB SER-522</scope>
</reference>
<reference key="52">
    <citation type="journal article" date="2012" name="JIMD Rep.">
        <title>Molecular genetic characterization of novel sphingomyelin phosphodiesterase 1 mutations causing niemann-pick disease.</title>
        <authorList>
            <person name="Toth B."/>
            <person name="Erdos M."/>
            <person name="Szekely A."/>
            <person name="Ritli L."/>
            <person name="Bagossi P."/>
            <person name="Suemegi J."/>
            <person name="Marodi L."/>
        </authorList>
    </citation>
    <scope>VARIANTS NPDA ASP-247 AND LEU-572</scope>
    <scope>CHARACTERIZATION OF VARIANTS NPDA ASP-247 AND LEU-572</scope>
</reference>
<reference key="53">
    <citation type="journal article" date="2012" name="Mol. Genet. Metab.">
        <title>Acid sphingomyelinase (Asm) deficiency patients in The Netherlands and Belgium: disease spectrum and natural course in attenuated patients.</title>
        <authorList>
            <person name="Hollak C.E."/>
            <person name="de Sonnaville E.S."/>
            <person name="Cassiman D."/>
            <person name="Linthorst G.E."/>
            <person name="Groener J.E."/>
            <person name="Morava E."/>
            <person name="Wevers R.A."/>
            <person name="Mannens M."/>
            <person name="Aerts J.M."/>
            <person name="Meersseman W."/>
            <person name="Akkerman E."/>
            <person name="Niezen-Koning K.E."/>
            <person name="Mulder M.F."/>
            <person name="Visser G."/>
            <person name="Wijburg F.A."/>
            <person name="Lefeber D."/>
            <person name="Poorthuis B.J."/>
        </authorList>
    </citation>
    <scope>VARIANTS NPDB HIS-91; PRO-105; PRO-163; CYS-230; SER-373; PRO-551 AND ARG-610 DEL</scope>
    <scope>VARIANTS NPDA ARG-250; SER-465; LEU-477 AND HIS-539</scope>
</reference>
<reference key="54">
    <citation type="journal article" date="2013" name="Clin. Genet.">
        <title>Identification of seven novel SMPD1 mutations causing Niemann-Pick disease types A and B.</title>
        <authorList>
            <person name="Irun P."/>
            <person name="Mallen M."/>
            <person name="Dominguez C."/>
            <person name="Rodriguez-Sureda V."/>
            <person name="Alvarez-Sala L.A."/>
            <person name="Arslan N."/>
            <person name="Bermejo N."/>
            <person name="Guerrero C."/>
            <person name="Perez de Soto I."/>
            <person name="Villalon L."/>
            <person name="Giraldo P."/>
            <person name="Pocovi M."/>
        </authorList>
    </citation>
    <scope>VARIANTS NPDA ARG-228 AND ARG-387</scope>
    <scope>VARIANTS NPDB CYS-230; SER-247; HIS-378; TRP-476; SER-492; PHE-599 AND ARG-610 DEL</scope>
</reference>
<reference key="55">
    <citation type="journal article" date="2013" name="JIMD Rep.">
        <title>The acid sphingomyelinase sequence variant p.A487V is not associated with decreased levels of enzymatic activity.</title>
        <authorList>
            <person name="Rhein C."/>
            <person name="Naumann J."/>
            <person name="Muehle C."/>
            <person name="Zill P."/>
            <person name="Adli M."/>
            <person name="Hegerl U."/>
            <person name="Hiemke C."/>
            <person name="Mergl R."/>
            <person name="Moeller H.J."/>
            <person name="Reichel M."/>
            <person name="Kornhuber J."/>
        </authorList>
    </citation>
    <scope>CHARACTERIZATION OF VARIANT NPDB ALA-325</scope>
    <scope>CHARACTERIZATION OF VARIANT VAL-487</scope>
</reference>
<reference key="56">
    <citation type="journal article" date="2016" name="Am. J. Med. Genet. A">
        <title>Spectrum of SMPD1 mutations in Asian-Indian patients with acid sphingomyelinase (ASM)-deficient Niemann-Pick disease.</title>
        <authorList>
            <person name="Ranganath P."/>
            <person name="Matta D."/>
            <person name="Bhavani G.S."/>
            <person name="Wangnekar S."/>
            <person name="Jain J.M."/>
            <person name="Verma I.C."/>
            <person name="Kabra M."/>
            <person name="Puri R.D."/>
            <person name="Danda S."/>
            <person name="Gupta N."/>
            <person name="Girisha K.M."/>
            <person name="Sankar V.H."/>
            <person name="Patil S.J."/>
            <person name="Ramadevi A.R."/>
            <person name="Bhat M."/>
            <person name="Gowrishankar K."/>
            <person name="Mandal K."/>
            <person name="Aggarwal S."/>
            <person name="Tamhankar P.M."/>
            <person name="Tilak P."/>
            <person name="Phadke S.R."/>
            <person name="Dalal A."/>
        </authorList>
    </citation>
    <scope>VARIANTS ALA-36; PHE-510 AND GLY-605</scope>
    <scope>VARIANTS NPDA ARG-216; CYS-230; SER-255; ARG-319; PRO-324; ARG-343; ARG-363; HIS-391; ARG-393; SER-426; ILE-494; HIS-498; ARG-535 AND HIS-602</scope>
    <scope>VARIANTS NPDB PRO-105; PHE-282; ASP-320; CYS-369; SER-465; LEU-520 AND LYS-549</scope>
</reference>
<reference key="57">
    <citation type="journal article" date="2016" name="Hum. Mutat.">
        <title>SMPD1 mutation update: database and comprehensive analysis of published and novel variants.</title>
        <authorList>
            <person name="Zampieri S."/>
            <person name="Filocamo M."/>
            <person name="Pianta A."/>
            <person name="Lualdi S."/>
            <person name="Gort L."/>
            <person name="Coll M.J."/>
            <person name="Sinnott R."/>
            <person name="Geberhiwot T."/>
            <person name="Bembi B."/>
            <person name="Dardis A."/>
        </authorList>
    </citation>
    <scope>VARIANTS NPDB ILE-258; GLN-476; ASP-577; ARG-598 AND CYS-610</scope>
    <scope>VARIANT NPDA PHE-482 DEL</scope>
    <scope>REVIEW ON VARIANTS</scope>
</reference>
<reference key="58">
    <citation type="journal article" date="2015" name="Int. J. Mol. Sci.">
        <title>Alleged detrimental mutations in the SMPD1 gene in patients with Niemann-Pick disease.</title>
        <authorList>
            <person name="Rhein C."/>
            <person name="Muehle C."/>
            <person name="Kornhuber J."/>
            <person name="Reichel M."/>
        </authorList>
    </citation>
    <scope>CHARACTERIZATION OF VARIANT NPDB ALA-325</scope>
    <scope>CHARACTERIZATION OF VARIANTS ALA-36; VAL-487 AND ARG-508</scope>
    <scope>CATALYTIC ACTIVITY</scope>
</reference>
<reference key="59">
    <citation type="journal article" date="2016" name="Biochem. Biophys. Res. Commun.">
        <title>Structural and functional analysis of the ASM p.Ala359Asp mutant that causes acid sphingomyelinase deficiency.</title>
        <authorList>
            <person name="Acuna M."/>
            <person name="Castro-Fernandez V."/>
            <person name="Latorre M."/>
            <person name="Castro J."/>
            <person name="Schuchman E.H."/>
            <person name="Guixe V."/>
            <person name="Gonzalez M."/>
            <person name="Zanlungo S."/>
        </authorList>
    </citation>
    <scope>FUNCTION</scope>
    <scope>CHARACTERIZATION OF VARIANT NPDB ASP-359</scope>
</reference>
<reference key="60">
    <citation type="journal article" date="2016" name="Eur. J. Hum. Genet.">
        <title>Epidemiological, clinical and biochemical characterization of the p.(Ala359Asp) SMPD1 variant causing Niemann-Pick disease type B.</title>
        <authorList>
            <person name="Acuna M."/>
            <person name="Martinez P."/>
            <person name="Moraga C."/>
            <person name="He X."/>
            <person name="Moraga M."/>
            <person name="Hunter B."/>
            <person name="Nuernberg P."/>
            <person name="Gutierrez R.A."/>
            <person name="Gonzalez M."/>
            <person name="Schuchman E.H."/>
            <person name="Santos J.L."/>
            <person name="Miquel J.F."/>
            <person name="Mabe P."/>
            <person name="Zanlungo S."/>
        </authorList>
    </citation>
    <scope>FUNCTION</scope>
    <scope>SUBCELLULAR LOCATION</scope>
    <scope>VARIANT NPDB ASP-359</scope>
    <scope>CHARACTERIZATION OF VARIANT NPDB ASP-359</scope>
</reference>
<dbReference type="EC" id="3.1.4.12" evidence="14 19 23 24 41 44 56"/>
<dbReference type="EC" id="3.1.4.3" evidence="41"/>
<dbReference type="EMBL" id="M59916">
    <property type="protein sequence ID" value="AAA58377.1"/>
    <property type="molecule type" value="mRNA"/>
</dbReference>
<dbReference type="EMBL" id="M59917">
    <property type="protein sequence ID" value="AAA58378.1"/>
    <property type="molecule type" value="Genomic_DNA"/>
</dbReference>
<dbReference type="EMBL" id="X63600">
    <property type="protein sequence ID" value="CAA45145.1"/>
    <property type="molecule type" value="Genomic_DNA"/>
</dbReference>
<dbReference type="EMBL" id="M81780">
    <property type="protein sequence ID" value="AAA75008.1"/>
    <property type="molecule type" value="Genomic_DNA"/>
</dbReference>
<dbReference type="EMBL" id="M81780">
    <property type="protein sequence ID" value="AAA75009.1"/>
    <property type="molecule type" value="Genomic_DNA"/>
</dbReference>
<dbReference type="EMBL" id="X59960">
    <property type="protein sequence ID" value="CAA42584.1"/>
    <property type="molecule type" value="mRNA"/>
</dbReference>
<dbReference type="EMBL" id="AK292388">
    <property type="protein sequence ID" value="BAF85077.1"/>
    <property type="molecule type" value="mRNA"/>
</dbReference>
<dbReference type="EMBL" id="AC068733">
    <property type="status" value="NOT_ANNOTATED_CDS"/>
    <property type="molecule type" value="Genomic_DNA"/>
</dbReference>
<dbReference type="EMBL" id="X52678">
    <property type="protein sequence ID" value="CAA36901.1"/>
    <property type="molecule type" value="mRNA"/>
</dbReference>
<dbReference type="EMBL" id="X52679">
    <property type="protein sequence ID" value="CAA36902.1"/>
    <property type="molecule type" value="mRNA"/>
</dbReference>
<dbReference type="CCDS" id="CCDS31409.2">
    <molecule id="P17405-4"/>
</dbReference>
<dbReference type="CCDS" id="CCDS44531.1">
    <molecule id="P17405-1"/>
</dbReference>
<dbReference type="PIR" id="S06958">
    <property type="entry name" value="S06958"/>
</dbReference>
<dbReference type="PIR" id="S27009">
    <property type="entry name" value="A39825"/>
</dbReference>
<dbReference type="RefSeq" id="NP_000534.3">
    <molecule id="P17405-1"/>
    <property type="nucleotide sequence ID" value="NM_000543.4"/>
</dbReference>
<dbReference type="RefSeq" id="NP_001007594.2">
    <molecule id="P17405-4"/>
    <property type="nucleotide sequence ID" value="NM_001007593.3"/>
</dbReference>
<dbReference type="RefSeq" id="NP_001305016.1">
    <property type="nucleotide sequence ID" value="NM_001318087.1"/>
</dbReference>
<dbReference type="RefSeq" id="NP_001305017.1">
    <property type="nucleotide sequence ID" value="NM_001318088.1"/>
</dbReference>
<dbReference type="RefSeq" id="NP_001352064.1">
    <molecule id="P17405-2"/>
    <property type="nucleotide sequence ID" value="NM_001365135.2"/>
</dbReference>
<dbReference type="RefSeq" id="XP_011518605.1">
    <property type="nucleotide sequence ID" value="XM_011520303.1"/>
</dbReference>
<dbReference type="PDB" id="5I81">
    <property type="method" value="X-ray"/>
    <property type="resolution" value="2.25 A"/>
    <property type="chains" value="A=47-631"/>
</dbReference>
<dbReference type="PDB" id="5I85">
    <property type="method" value="X-ray"/>
    <property type="resolution" value="2.50 A"/>
    <property type="chains" value="A=47-631"/>
</dbReference>
<dbReference type="PDB" id="5I8R">
    <property type="method" value="X-ray"/>
    <property type="resolution" value="3.65 A"/>
    <property type="chains" value="A/B/C=47-631"/>
</dbReference>
<dbReference type="PDB" id="5JG8">
    <property type="method" value="X-ray"/>
    <property type="resolution" value="2.80 A"/>
    <property type="chains" value="A/B=47-631"/>
</dbReference>
<dbReference type="PDBsum" id="5I81"/>
<dbReference type="PDBsum" id="5I85"/>
<dbReference type="PDBsum" id="5I8R"/>
<dbReference type="PDBsum" id="5JG8"/>
<dbReference type="SMR" id="P17405"/>
<dbReference type="BioGRID" id="112493">
    <property type="interactions" value="33"/>
</dbReference>
<dbReference type="FunCoup" id="P17405">
    <property type="interactions" value="644"/>
</dbReference>
<dbReference type="IntAct" id="P17405">
    <property type="interactions" value="26"/>
</dbReference>
<dbReference type="MINT" id="P17405"/>
<dbReference type="STRING" id="9606.ENSP00000340409"/>
<dbReference type="BindingDB" id="P17405"/>
<dbReference type="ChEMBL" id="CHEMBL2760"/>
<dbReference type="DrugBank" id="DB00381">
    <property type="generic name" value="Amlodipine"/>
</dbReference>
<dbReference type="DrugBank" id="DB12151">
    <property type="generic name" value="Brincidofovir"/>
</dbReference>
<dbReference type="DrugBank" id="DB00477">
    <property type="generic name" value="Chlorpromazine"/>
</dbReference>
<dbReference type="DrugBank" id="DB01151">
    <property type="generic name" value="Desipramine"/>
</dbReference>
<dbReference type="DrugBank" id="DB14009">
    <property type="generic name" value="Medical Cannabis"/>
</dbReference>
<dbReference type="DrugCentral" id="P17405"/>
<dbReference type="GuidetoPHARMACOLOGY" id="2514"/>
<dbReference type="SwissLipids" id="SLP:000001748"/>
<dbReference type="GlyConnect" id="2081">
    <property type="glycosylation" value="1 N-Linked glycan (1 site)"/>
</dbReference>
<dbReference type="GlyCosmos" id="P17405">
    <property type="glycosylation" value="6 sites, 2 glycans"/>
</dbReference>
<dbReference type="GlyGen" id="P17405">
    <property type="glycosylation" value="9 sites, 4 N-linked glycans (2 sites), 1 O-linked glycan (1 site)"/>
</dbReference>
<dbReference type="iPTMnet" id="P17405"/>
<dbReference type="PhosphoSitePlus" id="P17405"/>
<dbReference type="SwissPalm" id="P17405"/>
<dbReference type="BioMuta" id="SMPD1"/>
<dbReference type="DMDM" id="224471897"/>
<dbReference type="jPOST" id="P17405"/>
<dbReference type="MassIVE" id="P17405"/>
<dbReference type="PaxDb" id="9606-ENSP00000340409"/>
<dbReference type="PeptideAtlas" id="P17405"/>
<dbReference type="ProteomicsDB" id="21562"/>
<dbReference type="ProteomicsDB" id="53470">
    <molecule id="P17405-1"/>
</dbReference>
<dbReference type="ProteomicsDB" id="53471">
    <molecule id="P17405-2"/>
</dbReference>
<dbReference type="ProteomicsDB" id="53472">
    <molecule id="P17405-3"/>
</dbReference>
<dbReference type="Pumba" id="P17405"/>
<dbReference type="Antibodypedia" id="1065">
    <property type="antibodies" value="305 antibodies from 31 providers"/>
</dbReference>
<dbReference type="DNASU" id="6609"/>
<dbReference type="Ensembl" id="ENST00000342245.9">
    <molecule id="P17405-1"/>
    <property type="protein sequence ID" value="ENSP00000340409.4"/>
    <property type="gene ID" value="ENSG00000166311.10"/>
</dbReference>
<dbReference type="Ensembl" id="ENST00000527275.5">
    <molecule id="P17405-4"/>
    <property type="protein sequence ID" value="ENSP00000435350.1"/>
    <property type="gene ID" value="ENSG00000166311.10"/>
</dbReference>
<dbReference type="GeneID" id="6609"/>
<dbReference type="KEGG" id="hsa:6609"/>
<dbReference type="MANE-Select" id="ENST00000342245.9">
    <property type="protein sequence ID" value="ENSP00000340409.4"/>
    <property type="RefSeq nucleotide sequence ID" value="NM_000543.5"/>
    <property type="RefSeq protein sequence ID" value="NP_000534.3"/>
</dbReference>
<dbReference type="UCSC" id="uc001mcw.4">
    <molecule id="P17405-1"/>
    <property type="organism name" value="human"/>
</dbReference>
<dbReference type="AGR" id="HGNC:11120"/>
<dbReference type="CTD" id="6609"/>
<dbReference type="DisGeNET" id="6609"/>
<dbReference type="GeneCards" id="SMPD1"/>
<dbReference type="GeneReviews" id="SMPD1"/>
<dbReference type="HGNC" id="HGNC:11120">
    <property type="gene designation" value="SMPD1"/>
</dbReference>
<dbReference type="HPA" id="ENSG00000166311">
    <property type="expression patterns" value="Low tissue specificity"/>
</dbReference>
<dbReference type="MalaCards" id="SMPD1"/>
<dbReference type="MIM" id="257200">
    <property type="type" value="phenotype"/>
</dbReference>
<dbReference type="MIM" id="607608">
    <property type="type" value="gene"/>
</dbReference>
<dbReference type="MIM" id="607616">
    <property type="type" value="phenotype"/>
</dbReference>
<dbReference type="neXtProt" id="NX_P17405"/>
<dbReference type="OpenTargets" id="ENSG00000166311"/>
<dbReference type="Orphanet" id="77293">
    <property type="disease" value="Chronic visceral acid sphingomyelinase deficiency"/>
</dbReference>
<dbReference type="Orphanet" id="77292">
    <property type="disease" value="Infantile neurovisceral acid sphingomyelinase deficiency"/>
</dbReference>
<dbReference type="PharmGKB" id="PA35969"/>
<dbReference type="VEuPathDB" id="HostDB:ENSG00000166311"/>
<dbReference type="eggNOG" id="KOG3770">
    <property type="taxonomic scope" value="Eukaryota"/>
</dbReference>
<dbReference type="GeneTree" id="ENSGT00950000183182"/>
<dbReference type="InParanoid" id="P17405"/>
<dbReference type="OMA" id="VWSQTRK"/>
<dbReference type="OrthoDB" id="282973at2759"/>
<dbReference type="PAN-GO" id="P17405">
    <property type="GO annotations" value="5 GO annotations based on evolutionary models"/>
</dbReference>
<dbReference type="PhylomeDB" id="P17405"/>
<dbReference type="TreeFam" id="TF313674"/>
<dbReference type="BRENDA" id="3.1.4.12">
    <property type="organism ID" value="2681"/>
</dbReference>
<dbReference type="PathwayCommons" id="P17405"/>
<dbReference type="Reactome" id="R-HSA-9840310">
    <property type="pathway name" value="Glycosphingolipid catabolism"/>
</dbReference>
<dbReference type="SignaLink" id="P17405"/>
<dbReference type="SIGNOR" id="P17405"/>
<dbReference type="BioGRID-ORCS" id="6609">
    <property type="hits" value="11 hits in 1170 CRISPR screens"/>
</dbReference>
<dbReference type="ChiTaRS" id="SMPD1">
    <property type="organism name" value="human"/>
</dbReference>
<dbReference type="GeneWiki" id="Sphingomyelin_phosphodiesterase_1"/>
<dbReference type="GenomeRNAi" id="6609"/>
<dbReference type="Pharos" id="P17405">
    <property type="development level" value="Tchem"/>
</dbReference>
<dbReference type="PRO" id="PR:P17405"/>
<dbReference type="Proteomes" id="UP000005640">
    <property type="component" value="Chromosome 11"/>
</dbReference>
<dbReference type="RNAct" id="P17405">
    <property type="molecule type" value="protein"/>
</dbReference>
<dbReference type="Bgee" id="ENSG00000166311">
    <property type="expression patterns" value="Expressed in type B pancreatic cell and 187 other cell types or tissues"/>
</dbReference>
<dbReference type="ExpressionAtlas" id="P17405">
    <property type="expression patterns" value="baseline and differential"/>
</dbReference>
<dbReference type="GO" id="GO:0036019">
    <property type="term" value="C:endolysosome"/>
    <property type="evidence" value="ECO:0000314"/>
    <property type="project" value="UniProtKB"/>
</dbReference>
<dbReference type="GO" id="GO:0005768">
    <property type="term" value="C:endosome"/>
    <property type="evidence" value="ECO:0000314"/>
    <property type="project" value="UniProtKB"/>
</dbReference>
<dbReference type="GO" id="GO:0070062">
    <property type="term" value="C:extracellular exosome"/>
    <property type="evidence" value="ECO:0007005"/>
    <property type="project" value="UniProtKB"/>
</dbReference>
<dbReference type="GO" id="GO:0005615">
    <property type="term" value="C:extracellular space"/>
    <property type="evidence" value="ECO:0000314"/>
    <property type="project" value="UniProtKB"/>
</dbReference>
<dbReference type="GO" id="GO:0042599">
    <property type="term" value="C:lamellar body"/>
    <property type="evidence" value="ECO:0007669"/>
    <property type="project" value="Ensembl"/>
</dbReference>
<dbReference type="GO" id="GO:0005811">
    <property type="term" value="C:lipid droplet"/>
    <property type="evidence" value="ECO:0007669"/>
    <property type="project" value="UniProtKB-SubCell"/>
</dbReference>
<dbReference type="GO" id="GO:0043202">
    <property type="term" value="C:lysosomal lumen"/>
    <property type="evidence" value="ECO:0000304"/>
    <property type="project" value="Reactome"/>
</dbReference>
<dbReference type="GO" id="GO:0005764">
    <property type="term" value="C:lysosome"/>
    <property type="evidence" value="ECO:0000314"/>
    <property type="project" value="UniProtKB"/>
</dbReference>
<dbReference type="GO" id="GO:0005886">
    <property type="term" value="C:plasma membrane"/>
    <property type="evidence" value="ECO:0000314"/>
    <property type="project" value="UniProtKB"/>
</dbReference>
<dbReference type="GO" id="GO:0061750">
    <property type="term" value="F:acid sphingomyelin phosphodiesterase activity"/>
    <property type="evidence" value="ECO:0000314"/>
    <property type="project" value="UniProtKB"/>
</dbReference>
<dbReference type="GO" id="GO:0016798">
    <property type="term" value="F:hydrolase activity, acting on glycosyl bonds"/>
    <property type="evidence" value="ECO:0007669"/>
    <property type="project" value="UniProtKB-KW"/>
</dbReference>
<dbReference type="GO" id="GO:0034480">
    <property type="term" value="F:phosphatidylcholine phospholipase C activity"/>
    <property type="evidence" value="ECO:0007669"/>
    <property type="project" value="RHEA"/>
</dbReference>
<dbReference type="GO" id="GO:0004767">
    <property type="term" value="F:sphingomyelin phosphodiesterase activity"/>
    <property type="evidence" value="ECO:0000314"/>
    <property type="project" value="UniProtKB"/>
</dbReference>
<dbReference type="GO" id="GO:0008270">
    <property type="term" value="F:zinc ion binding"/>
    <property type="evidence" value="ECO:0000314"/>
    <property type="project" value="UniProtKB"/>
</dbReference>
<dbReference type="GO" id="GO:0071277">
    <property type="term" value="P:cellular response to calcium ion"/>
    <property type="evidence" value="ECO:0000314"/>
    <property type="project" value="UniProtKB"/>
</dbReference>
<dbReference type="GO" id="GO:0034644">
    <property type="term" value="P:cellular response to UV"/>
    <property type="evidence" value="ECO:0000314"/>
    <property type="project" value="UniProtKB"/>
</dbReference>
<dbReference type="GO" id="GO:0046513">
    <property type="term" value="P:ceramide biosynthetic process"/>
    <property type="evidence" value="ECO:0000314"/>
    <property type="project" value="UniProtKB"/>
</dbReference>
<dbReference type="GO" id="GO:0008203">
    <property type="term" value="P:cholesterol metabolic process"/>
    <property type="evidence" value="ECO:0007669"/>
    <property type="project" value="Ensembl"/>
</dbReference>
<dbReference type="GO" id="GO:0046479">
    <property type="term" value="P:glycosphingolipid catabolic process"/>
    <property type="evidence" value="ECO:0000304"/>
    <property type="project" value="Reactome"/>
</dbReference>
<dbReference type="GO" id="GO:0043409">
    <property type="term" value="P:negative regulation of MAPK cascade"/>
    <property type="evidence" value="ECO:0000315"/>
    <property type="project" value="BHF-UCL"/>
</dbReference>
<dbReference type="GO" id="GO:0007399">
    <property type="term" value="P:nervous system development"/>
    <property type="evidence" value="ECO:0000304"/>
    <property type="project" value="ProtInc"/>
</dbReference>
<dbReference type="GO" id="GO:0001778">
    <property type="term" value="P:plasma membrane repair"/>
    <property type="evidence" value="ECO:0000314"/>
    <property type="project" value="UniProtKB"/>
</dbReference>
<dbReference type="GO" id="GO:0043065">
    <property type="term" value="P:positive regulation of apoptotic process"/>
    <property type="evidence" value="ECO:0000315"/>
    <property type="project" value="UniProtKB"/>
</dbReference>
<dbReference type="GO" id="GO:0045807">
    <property type="term" value="P:positive regulation of endocytosis"/>
    <property type="evidence" value="ECO:0000314"/>
    <property type="project" value="UniProtKB"/>
</dbReference>
<dbReference type="GO" id="GO:0046598">
    <property type="term" value="P:positive regulation of viral entry into host cell"/>
    <property type="evidence" value="ECO:0000314"/>
    <property type="project" value="UniProtKB"/>
</dbReference>
<dbReference type="GO" id="GO:0042220">
    <property type="term" value="P:response to cocaine"/>
    <property type="evidence" value="ECO:0007669"/>
    <property type="project" value="Ensembl"/>
</dbReference>
<dbReference type="GO" id="GO:0070555">
    <property type="term" value="P:response to interleukin-1"/>
    <property type="evidence" value="ECO:0000314"/>
    <property type="project" value="UniProtKB"/>
</dbReference>
<dbReference type="GO" id="GO:0010212">
    <property type="term" value="P:response to ionizing radiation"/>
    <property type="evidence" value="ECO:0000315"/>
    <property type="project" value="UniProtKB"/>
</dbReference>
<dbReference type="GO" id="GO:0034612">
    <property type="term" value="P:response to tumor necrosis factor"/>
    <property type="evidence" value="ECO:0000314"/>
    <property type="project" value="UniProtKB"/>
</dbReference>
<dbReference type="GO" id="GO:0034340">
    <property type="term" value="P:response to type I interferon"/>
    <property type="evidence" value="ECO:0000314"/>
    <property type="project" value="UniProtKB"/>
</dbReference>
<dbReference type="GO" id="GO:0009615">
    <property type="term" value="P:response to virus"/>
    <property type="evidence" value="ECO:0000314"/>
    <property type="project" value="UniProtKB"/>
</dbReference>
<dbReference type="GO" id="GO:0009410">
    <property type="term" value="P:response to xenobiotic stimulus"/>
    <property type="evidence" value="ECO:0007669"/>
    <property type="project" value="Ensembl"/>
</dbReference>
<dbReference type="GO" id="GO:0007165">
    <property type="term" value="P:signal transduction"/>
    <property type="evidence" value="ECO:0000304"/>
    <property type="project" value="ProtInc"/>
</dbReference>
<dbReference type="GO" id="GO:0006685">
    <property type="term" value="P:sphingomyelin catabolic process"/>
    <property type="evidence" value="ECO:0000314"/>
    <property type="project" value="UniProtKB"/>
</dbReference>
<dbReference type="GO" id="GO:0006684">
    <property type="term" value="P:sphingomyelin metabolic process"/>
    <property type="evidence" value="ECO:0000304"/>
    <property type="project" value="ProtInc"/>
</dbReference>
<dbReference type="GO" id="GO:0046718">
    <property type="term" value="P:symbiont entry into host cell"/>
    <property type="evidence" value="ECO:0000314"/>
    <property type="project" value="UniProtKB"/>
</dbReference>
<dbReference type="GO" id="GO:0023021">
    <property type="term" value="P:termination of signal transduction"/>
    <property type="evidence" value="ECO:0000315"/>
    <property type="project" value="BHF-UCL"/>
</dbReference>
<dbReference type="GO" id="GO:0042060">
    <property type="term" value="P:wound healing"/>
    <property type="evidence" value="ECO:0000314"/>
    <property type="project" value="UniProtKB"/>
</dbReference>
<dbReference type="CDD" id="cd00842">
    <property type="entry name" value="MPP_ASMase"/>
    <property type="match status" value="1"/>
</dbReference>
<dbReference type="DisProt" id="DP02027"/>
<dbReference type="FunFam" id="3.60.21.10:FF:000045">
    <property type="entry name" value="Sphingomyelin phosphodiesterase"/>
    <property type="match status" value="1"/>
</dbReference>
<dbReference type="Gene3D" id="3.60.21.10">
    <property type="match status" value="1"/>
</dbReference>
<dbReference type="InterPro" id="IPR045473">
    <property type="entry name" value="ASM_C"/>
</dbReference>
<dbReference type="InterPro" id="IPR041805">
    <property type="entry name" value="ASMase/PPN1_MPP"/>
</dbReference>
<dbReference type="InterPro" id="IPR004843">
    <property type="entry name" value="Calcineurin-like_PHP_ApaH"/>
</dbReference>
<dbReference type="InterPro" id="IPR029052">
    <property type="entry name" value="Metallo-depent_PP-like"/>
</dbReference>
<dbReference type="InterPro" id="IPR011001">
    <property type="entry name" value="Saposin-like"/>
</dbReference>
<dbReference type="InterPro" id="IPR008139">
    <property type="entry name" value="SaposinB_dom"/>
</dbReference>
<dbReference type="InterPro" id="IPR011160">
    <property type="entry name" value="Sphingomy_PDE"/>
</dbReference>
<dbReference type="PANTHER" id="PTHR10340">
    <property type="entry name" value="SPHINGOMYELIN PHOSPHODIESTERASE"/>
    <property type="match status" value="1"/>
</dbReference>
<dbReference type="PANTHER" id="PTHR10340:SF34">
    <property type="entry name" value="SPHINGOMYELIN PHOSPHODIESTERASE"/>
    <property type="match status" value="1"/>
</dbReference>
<dbReference type="Pfam" id="PF19272">
    <property type="entry name" value="ASMase_C"/>
    <property type="match status" value="1"/>
</dbReference>
<dbReference type="Pfam" id="PF00149">
    <property type="entry name" value="Metallophos"/>
    <property type="match status" value="1"/>
</dbReference>
<dbReference type="PIRSF" id="PIRSF000948">
    <property type="entry name" value="Sphingomy_PDE"/>
    <property type="match status" value="1"/>
</dbReference>
<dbReference type="SMART" id="SM00741">
    <property type="entry name" value="SapB"/>
    <property type="match status" value="1"/>
</dbReference>
<dbReference type="SUPFAM" id="SSF56300">
    <property type="entry name" value="Metallo-dependent phosphatases"/>
    <property type="match status" value="1"/>
</dbReference>
<dbReference type="SUPFAM" id="SSF47862">
    <property type="entry name" value="Saposin"/>
    <property type="match status" value="1"/>
</dbReference>
<dbReference type="PROSITE" id="PS50015">
    <property type="entry name" value="SAP_B"/>
    <property type="match status" value="1"/>
</dbReference>
<gene>
    <name evidence="75" type="primary">SMPD1</name>
    <name evidence="63" type="synonym">ASM</name>
</gene>
<organism>
    <name type="scientific">Homo sapiens</name>
    <name type="common">Human</name>
    <dbReference type="NCBI Taxonomy" id="9606"/>
    <lineage>
        <taxon>Eukaryota</taxon>
        <taxon>Metazoa</taxon>
        <taxon>Chordata</taxon>
        <taxon>Craniata</taxon>
        <taxon>Vertebrata</taxon>
        <taxon>Euteleostomi</taxon>
        <taxon>Mammalia</taxon>
        <taxon>Eutheria</taxon>
        <taxon>Euarchontoglires</taxon>
        <taxon>Primates</taxon>
        <taxon>Haplorrhini</taxon>
        <taxon>Catarrhini</taxon>
        <taxon>Hominidae</taxon>
        <taxon>Homo</taxon>
    </lineage>
</organism>
<name>ASM_HUMAN</name>
<feature type="signal peptide">
    <location>
        <begin position="1"/>
        <end position="46"/>
    </location>
</feature>
<feature type="chain" id="PRO_0000002323" description="Sphingomyelin phosphodiesterase">
    <location>
        <begin position="47"/>
        <end position="631"/>
    </location>
</feature>
<feature type="chain" id="PRO_0000456684" description="Sphingomyelin phosphodiesterase, processed form">
    <location>
        <begin position="254"/>
        <end position="631"/>
    </location>
</feature>
<feature type="domain" description="Saposin B-type" evidence="2">
    <location>
        <begin position="87"/>
        <end position="171"/>
    </location>
</feature>
<feature type="region of interest" description="Disordered" evidence="3">
    <location>
        <begin position="1"/>
        <end position="23"/>
    </location>
</feature>
<feature type="binding site" evidence="47 76 77 78 79">
    <location>
        <position position="208"/>
    </location>
    <ligand>
        <name>Zn(2+)</name>
        <dbReference type="ChEBI" id="CHEBI:29105"/>
        <label>1</label>
    </ligand>
</feature>
<feature type="binding site" evidence="47 76 77 78 79">
    <location>
        <position position="210"/>
    </location>
    <ligand>
        <name>Zn(2+)</name>
        <dbReference type="ChEBI" id="CHEBI:29105"/>
        <label>1</label>
    </ligand>
</feature>
<feature type="binding site" evidence="47 76 77 78 79">
    <location>
        <position position="280"/>
    </location>
    <ligand>
        <name>Zn(2+)</name>
        <dbReference type="ChEBI" id="CHEBI:29105"/>
        <label>1</label>
    </ligand>
</feature>
<feature type="binding site" evidence="47 76 77 78 79">
    <location>
        <position position="280"/>
    </location>
    <ligand>
        <name>Zn(2+)</name>
        <dbReference type="ChEBI" id="CHEBI:29105"/>
        <label>2</label>
    </ligand>
</feature>
<feature type="binding site" evidence="47 76 77 78 79">
    <location>
        <position position="320"/>
    </location>
    <ligand>
        <name>Zn(2+)</name>
        <dbReference type="ChEBI" id="CHEBI:29105"/>
        <label>2</label>
    </ligand>
</feature>
<feature type="binding site" evidence="47 76 77 78 79">
    <location>
        <position position="427"/>
    </location>
    <ligand>
        <name>Zn(2+)</name>
        <dbReference type="ChEBI" id="CHEBI:29105"/>
        <label>2</label>
    </ligand>
</feature>
<feature type="binding site" evidence="47 76 77 78 79">
    <location>
        <position position="459"/>
    </location>
    <ligand>
        <name>Zn(2+)</name>
        <dbReference type="ChEBI" id="CHEBI:29105"/>
        <label>2</label>
    </ligand>
</feature>
<feature type="binding site" evidence="47 76 77 78 79">
    <location>
        <position position="461"/>
    </location>
    <ligand>
        <name>Zn(2+)</name>
        <dbReference type="ChEBI" id="CHEBI:29105"/>
        <label>1</label>
    </ligand>
</feature>
<feature type="site" description="Cleavage; by CASP7" evidence="33">
    <location>
        <begin position="253"/>
        <end position="254"/>
    </location>
</feature>
<feature type="modified residue" description="Phosphoserine; by PKC/PRKCD" evidence="20">
    <location>
        <position position="510"/>
    </location>
</feature>
<feature type="glycosylation site" description="N-linked (GlcNAc...) asparagine" evidence="2 47 58 76 77 78 79">
    <location>
        <position position="88"/>
    </location>
</feature>
<feature type="glycosylation site" description="N-linked (GlcNAc...) asparagine" evidence="2 47 58 76 77 78 79">
    <location>
        <position position="177"/>
    </location>
</feature>
<feature type="glycosylation site" description="N-linked (GlcNAc...) asparagine" evidence="2 47 58 76 78 79">
    <location>
        <position position="337"/>
    </location>
</feature>
<feature type="glycosylation site" description="N-linked (GlcNAc...) asparagine" evidence="2 47 58 76 77 78 79">
    <location>
        <position position="397"/>
    </location>
</feature>
<feature type="glycosylation site" description="N-linked (GlcNAc...) asparagine" evidence="47 76 77 78 79">
    <location>
        <position position="505"/>
    </location>
</feature>
<feature type="glycosylation site" description="N-linked (GlcNAc...) asparagine" evidence="2 47 58 76 77 78 79">
    <location>
        <position position="522"/>
    </location>
</feature>
<feature type="disulfide bond" evidence="2 47 79">
    <location>
        <begin position="91"/>
        <end position="167"/>
    </location>
</feature>
<feature type="disulfide bond" evidence="2 47 79">
    <location>
        <begin position="94"/>
        <end position="159"/>
    </location>
</feature>
<feature type="disulfide bond" evidence="2 7 47 79">
    <location>
        <begin position="122"/>
        <end position="133"/>
    </location>
</feature>
<feature type="disulfide bond" evidence="2 7 47 79">
    <location>
        <begin position="223"/>
        <end position="228"/>
    </location>
</feature>
<feature type="disulfide bond" evidence="2 7 47 79">
    <location>
        <begin position="229"/>
        <end position="252"/>
    </location>
</feature>
<feature type="disulfide bond" evidence="2 7 47 79">
    <location>
        <begin position="387"/>
        <end position="433"/>
    </location>
</feature>
<feature type="disulfide bond" evidence="2 7 47 79">
    <location>
        <begin position="586"/>
        <end position="590"/>
    </location>
</feature>
<feature type="disulfide bond" evidence="2 7 47 79">
    <location>
        <begin position="596"/>
        <end position="609"/>
    </location>
</feature>
<feature type="splice variant" id="VSP_046964" description="In isoform 4." evidence="62">
    <location>
        <position position="106"/>
    </location>
</feature>
<feature type="splice variant" id="VSP_000333" description="In isoform 3." evidence="66">
    <location>
        <begin position="365"/>
        <end position="420"/>
    </location>
</feature>
<feature type="splice variant" id="VSP_000331" description="In isoform 2." evidence="66">
    <original>IGGFYALSPYPG</original>
    <variation>YLSSVETQEGKR</variation>
    <location>
        <begin position="365"/>
        <end position="376"/>
    </location>
</feature>
<feature type="splice variant" id="VSP_000332" description="In isoform 2." evidence="66">
    <location>
        <begin position="377"/>
        <end position="420"/>
    </location>
</feature>
<feature type="sequence variant" id="VAR_080641" description="In dbSNP:rs550365194." evidence="21 52">
    <location>
        <begin position="36"/>
        <end position="39"/>
    </location>
</feature>
<feature type="sequence variant" id="VAR_038191" description="Does not affect enzymatic activity; dbSNP:rs1050228." evidence="21 44 46">
    <original>V</original>
    <variation>A</variation>
    <location>
        <position position="36"/>
    </location>
</feature>
<feature type="sequence variant" id="VAR_080642" description="In dbSNP:rs3838786." evidence="8 11 23 52">
    <location>
        <begin position="48"/>
        <end position="49"/>
    </location>
</feature>
<feature type="sequence variant" id="VAR_060870" description="In NPDB; uncertain significance; dbSNP:rs748589919." evidence="4">
    <original>D</original>
    <variation>V</variation>
    <location>
        <position position="51"/>
    </location>
</feature>
<feature type="sequence variant" id="VAR_075322" description="In NPDB; requires 2 nucleotide substitutions." evidence="37">
    <original>C</original>
    <variation>H</variation>
    <location>
        <position position="91"/>
    </location>
</feature>
<feature type="sequence variant" id="VAR_060871" description="In NPDB." evidence="4">
    <original>C</original>
    <variation>W</variation>
    <location>
        <position position="94"/>
    </location>
</feature>
<feature type="sequence variant" id="VAR_060872" description="In NPDA and NPDB; expresses protein level comparable to wild-type SMPD1 expressing cells; retains very low enzyme activity; dbSNP:rs751269562." evidence="12 13 15 37 46">
    <original>L</original>
    <variation>P</variation>
    <location>
        <position position="105"/>
    </location>
</feature>
<feature type="sequence variant" id="VAR_060873" description="In NPDB; expresses protein level comparable to wild-type SMPD1 expressing cells; retains 13% residual enzyme activity." evidence="15">
    <original>V</original>
    <variation>A</variation>
    <location>
        <position position="132"/>
    </location>
</feature>
<feature type="sequence variant" id="VAR_060874" description="In NPDB; dbSNP:rs797044797." evidence="4">
    <original>L</original>
    <variation>P</variation>
    <location>
        <position position="139"/>
    </location>
</feature>
<feature type="sequence variant" id="VAR_011387" description="In NPDB; dbSNP:rs727504166." evidence="4 52">
    <original>C</original>
    <variation>R</variation>
    <location>
        <position position="159"/>
    </location>
</feature>
<feature type="sequence variant" id="VAR_075323" description="In NPDB; dbSNP:rs780134410." evidence="37">
    <original>L</original>
    <variation>P</variation>
    <location>
        <position position="163"/>
    </location>
</feature>
<feature type="sequence variant" id="VAR_060875" description="In NPDB; also in patients with an intermediate form; dbSNP:rs1847910654." evidence="14 17">
    <original>G</original>
    <variation>R</variation>
    <location>
        <position position="168"/>
    </location>
</feature>
<feature type="sequence variant" id="VAR_060876" description="In NPDB; dbSNP:rs749780769." evidence="17">
    <original>I</original>
    <variation>N</variation>
    <location>
        <position position="178"/>
    </location>
</feature>
<feature type="sequence variant" id="VAR_060877" description="In NPDA; reduces enzyme activity; intermediate form with clinical features of both Niemann-Pick disease types A and B; dbSNP:rs1057517195." evidence="14">
    <original>P</original>
    <variation>L</variation>
    <location>
        <position position="186"/>
    </location>
</feature>
<feature type="sequence variant" id="VAR_060878" description="In NPDB; dbSNP:rs797044798." evidence="4">
    <original>A</original>
    <variation>P</variation>
    <location>
        <position position="198"/>
    </location>
</feature>
<feature type="sequence variant" id="VAR_060879" description="In NPDB; dbSNP:rs749595299." evidence="4">
    <original>R</original>
    <variation>C</variation>
    <location>
        <position position="202"/>
    </location>
</feature>
<feature type="sequence variant" id="VAR_068435" description="In NPDA; results in less than 0.5% of wild-type activity." evidence="29">
    <original>W</original>
    <variation>R</variation>
    <location>
        <position position="211"/>
    </location>
</feature>
<feature type="sequence variant" id="VAR_077311" description="In NPDA; dbSNP:rs1590738910." evidence="46">
    <original>L</original>
    <variation>R</variation>
    <location>
        <position position="216"/>
    </location>
</feature>
<feature type="sequence variant" id="VAR_060880" description="In NPDB." evidence="4">
    <original>L</original>
    <variation>M</variation>
    <location>
        <position position="227"/>
    </location>
</feature>
<feature type="sequence variant" id="VAR_060881" description="In NPDB; expresses protein level comparable to wild-type SMPD1 expressing cells; retains no enzyme activity; dbSNP:rs764317969." evidence="13 15">
    <original>L</original>
    <variation>P</variation>
    <location>
        <position position="227"/>
    </location>
</feature>
<feature type="sequence variant" id="VAR_075324" description="In NPDA; dbSNP:rs1564923612." evidence="38">
    <original>C</original>
    <variation>R</variation>
    <location>
        <position position="228"/>
    </location>
</feature>
<feature type="sequence variant" id="VAR_060882" description="In NPDB and NPDA; some patients have a NPDA/NPDB intermediate phenotype; dbSNP:rs989639224 and dbSNP:rs1057516483." evidence="4 27 37 38 46">
    <original>R</original>
    <variation>C</variation>
    <location>
        <position position="230"/>
    </location>
</feature>
<feature type="sequence variant" id="VAR_060883" description="In NPDA; intermediate form with clinical features of both Niemann-Pick disease types A and B; dbSNP:rs141387770." evidence="14">
    <original>R</original>
    <variation>H</variation>
    <location>
        <position position="230"/>
    </location>
</feature>
<feature type="sequence variant" id="VAR_060884" description="In NPDB." evidence="4">
    <original>G</original>
    <variation>D</variation>
    <location>
        <position position="234"/>
    </location>
</feature>
<feature type="sequence variant" id="VAR_060885" description="In NPDA; intermediate form with clinical features of both Niemann-Pick disease types A and B; dbSNP:rs1291958011." evidence="14">
    <original>A</original>
    <variation>V</variation>
    <location>
        <position position="243"/>
    </location>
</feature>
<feature type="sequence variant" id="VAR_005058" description="In NPDB; dbSNP:rs120074122." evidence="16">
    <original>G</original>
    <variation>R</variation>
    <location>
        <position position="244"/>
    </location>
</feature>
<feature type="sequence variant" id="VAR_060886" description="In NPDB; expresses protein level comparable to wild-type SMPD1 expressing cells; retains no enzyme activity." evidence="13 15">
    <original>W</original>
    <variation>C</variation>
    <location>
        <position position="246"/>
    </location>
</feature>
<feature type="sequence variant" id="VAR_075325" description="In NPDA; severe decrease in activity; the mutant is highly unstable; dbSNP:rs1590739350." evidence="40">
    <original>G</original>
    <variation>D</variation>
    <location>
        <position position="247"/>
    </location>
</feature>
<feature type="sequence variant" id="VAR_060887" description="In NPDA and NPDB; dbSNP:rs587779408." evidence="4 12 27 38">
    <original>G</original>
    <variation>S</variation>
    <location>
        <position position="247"/>
    </location>
</feature>
<feature type="sequence variant" id="VAR_060888" description="In NPDA; dbSNP:rs200763423." evidence="12">
    <original>E</original>
    <variation>K</variation>
    <location>
        <position position="248"/>
    </location>
</feature>
<feature type="sequence variant" id="VAR_005059" description="In NPDB; 30% residual activity; dbSNP:rs200763423." evidence="53">
    <original>E</original>
    <variation>Q</variation>
    <location>
        <position position="248"/>
    </location>
</feature>
<feature type="sequence variant" id="VAR_015287" description="In NPDA and NPDB; also found in patients with an intermediate form; dbSNP:rs750779804." evidence="4 5 14 37">
    <original>S</original>
    <variation>R</variation>
    <location>
        <position position="250"/>
    </location>
</feature>
<feature type="sequence variant" id="VAR_060889" description="In NPDA; strongly reduces enzyme activity; intermediate form with clinical features of both Niemann-Pick disease types A and B; dbSNP:rs752000778." evidence="14">
    <original>D</original>
    <variation>E</variation>
    <location>
        <position position="253"/>
    </location>
</feature>
<feature type="sequence variant" id="VAR_068436" description="In NPDA; results in loss of activity; dbSNP:rs398123479." evidence="29">
    <original>D</original>
    <variation>H</variation>
    <location>
        <position position="253"/>
    </location>
</feature>
<feature type="sequence variant" id="VAR_077312" description="In NPDA." evidence="46">
    <original>P</original>
    <variation>S</variation>
    <location>
        <position position="255"/>
    </location>
</feature>
<feature type="sequence variant" id="VAR_075326" description="In NPDB." evidence="45">
    <original>T</original>
    <variation>I</variation>
    <location>
        <position position="258"/>
    </location>
</feature>
<feature type="sequence variant" id="VAR_060890" description="In NPDA; strongly reduces enzyme activity; intermediate form with clinical features of both Niemann-Pick disease types A and B; dbSNP:rs1847935299." evidence="14">
    <original>D</original>
    <variation>A</variation>
    <location>
        <position position="280"/>
    </location>
</feature>
<feature type="sequence variant" id="VAR_077313" description="In NPDB; requires 2 nucleotide substitutions." evidence="46">
    <original>P</original>
    <variation>F</variation>
    <location>
        <position position="282"/>
    </location>
</feature>
<feature type="sequence variant" id="VAR_060891" description="In NPDB; expresses protein level comparable to wild-type SMPD1 expressing cells; retains no enzyme activity; dbSNP:rs752148586." evidence="13 15">
    <original>A</original>
    <variation>T</variation>
    <location>
        <position position="283"/>
    </location>
</feature>
<feature type="sequence variant" id="VAR_060892" description="In NPDB; uncertain significance; dbSNP:rs1803161." evidence="4 14">
    <original>R</original>
    <variation>H</variation>
    <location>
        <position position="291"/>
    </location>
</feature>
<feature type="sequence variant" id="VAR_060893" description="In NPDA; strongly reduces enzyme activity; intermediate form with clinical features of both Niemann-Pick disease types A and B; dbSNP:rs120074128." evidence="13 14 59">
    <original>Q</original>
    <variation>K</variation>
    <location>
        <position position="294"/>
    </location>
</feature>
<feature type="sequence variant" id="VAR_060894" description="In dbSNP:rs35824453." evidence="12">
    <original>R</original>
    <variation>Q</variation>
    <location>
        <position position="296"/>
    </location>
</feature>
<feature type="sequence variant" id="VAR_005060" description="In NPDA; in 23% of NPDA Ashkenazi Jewish patients; abolishes enzyme activity; dbSNP:rs120074124." evidence="10 24">
    <original>L</original>
    <variation>P</variation>
    <location>
        <position position="304"/>
    </location>
</feature>
<feature type="sequence variant" id="VAR_068437" description="In NPDB; results in 20% of wild-type activity; dbSNP:rs1228068212." evidence="29">
    <original>V</original>
    <variation>M</variation>
    <location>
        <position position="314"/>
    </location>
</feature>
<feature type="sequence variant" id="VAR_060895" description="In NPDA." evidence="12">
    <original>Y</original>
    <variation>H</variation>
    <location>
        <position position="315"/>
    </location>
</feature>
<feature type="sequence variant" id="VAR_054642" description="In dbSNP:rs12575136.">
    <original>V</original>
    <variation>E</variation>
    <location>
        <position position="318"/>
    </location>
</feature>
<feature type="sequence variant" id="VAR_077314" description="In NPDA; dbSNP:rs757934797." evidence="46">
    <original>G</original>
    <variation>R</variation>
    <location>
        <position position="319"/>
    </location>
</feature>
<feature type="sequence variant" id="VAR_077315" description="In NPDB; uncertain significance; dbSNP:rs779927660." evidence="46">
    <original>N</original>
    <variation>D</variation>
    <location>
        <position position="320"/>
    </location>
</feature>
<feature type="sequence variant" id="VAR_015288" description="In NPDA; dbSNP:rs2134012749." evidence="5 37">
    <original>H</original>
    <variation>Y</variation>
    <location>
        <position position="321"/>
    </location>
</feature>
<feature type="sequence variant" id="VAR_054643" description="In dbSNP:rs1050233." evidence="23 42 44">
    <original>T</original>
    <variation>I</variation>
    <location>
        <position position="324"/>
    </location>
</feature>
<feature type="sequence variant" id="VAR_077316" description="In NPDA; uncertain significance." evidence="46">
    <original>T</original>
    <variation>P</variation>
    <location>
        <position position="324"/>
    </location>
</feature>
<feature type="sequence variant" id="VAR_060896" description="In NPDB; results in 1-4% of wild type activity; dbSNP:rs761308217." evidence="4 39 44">
    <original>P</original>
    <variation>A</variation>
    <location>
        <position position="325"/>
    </location>
</feature>
<feature type="sequence variant" id="VAR_060897" description="In NPDB; dbSNP:rs202081954." evidence="4 26">
    <original>P</original>
    <variation>R</variation>
    <location>
        <position position="332"/>
    </location>
</feature>
<feature type="sequence variant" id="VAR_060898" description="In NPDA; strongly reduces enzyme activity; intermediate form with clinical features of both Niemann-Pick disease types A and B." evidence="14 59">
    <original>L</original>
    <variation>P</variation>
    <location>
        <position position="343"/>
    </location>
</feature>
<feature type="sequence variant" id="VAR_077317" description="In NPDA." evidence="46">
    <original>L</original>
    <variation>R</variation>
    <location>
        <position position="343"/>
    </location>
</feature>
<feature type="sequence variant" id="VAR_060899" description="In NPDB; sphingomyelinase activity is decreased to 4% of wild-type activity; no effect on protein abundance; no effect on protein localization to lysosome; no effect on protein localization to extracellular space; dbSNP:rs797044800." evidence="4 43 48">
    <original>A</original>
    <variation>D</variation>
    <location>
        <position position="359"/>
    </location>
</feature>
<feature type="sequence variant" id="VAR_077318" description="In NPDA; uncertain significance; dbSNP:rs2134013368." evidence="46">
    <original>L</original>
    <variation>R</variation>
    <location>
        <position position="363"/>
    </location>
</feature>
<feature type="sequence variant" id="VAR_060900" description="In NPDA; dbSNP:rs372287825." evidence="27 46">
    <original>Y</original>
    <variation>C</variation>
    <location>
        <position position="369"/>
    </location>
</feature>
<feature type="sequence variant" id="VAR_015289" description="In NPDB; dbSNP:rs1342372980." evidence="5 37">
    <original>P</original>
    <variation>S</variation>
    <location>
        <position position="373"/>
    </location>
</feature>
<feature type="sequence variant" id="VAR_060901" description="In NPDB; reduces enzyme activity; some patients have a NPDA/NPDB intermediate phenotype; dbSNP:rs559088058." evidence="4 14 27 38">
    <original>R</original>
    <variation>H</variation>
    <location>
        <position position="378"/>
    </location>
</feature>
<feature type="sequence variant" id="VAR_060902" description="In NPDB." evidence="4">
    <original>R</original>
    <variation>L</variation>
    <location>
        <position position="378"/>
    </location>
</feature>
<feature type="sequence variant" id="VAR_060903" description="In NPDB." evidence="4">
    <original>S</original>
    <variation>P</variation>
    <location>
        <position position="381"/>
    </location>
</feature>
<feature type="sequence variant" id="VAR_005061" description="In NPDA and NPDB; dbSNP:rs120074121." evidence="13 16">
    <original>M</original>
    <variation>I</variation>
    <location>
        <position position="384"/>
    </location>
</feature>
<feature type="sequence variant" id="VAR_005062" description="In NPDB; dbSNP:rs120074123." evidence="16">
    <original>N</original>
    <variation>S</variation>
    <location>
        <position position="385"/>
    </location>
</feature>
<feature type="sequence variant" id="VAR_075327" description="In NPDA." evidence="38">
    <original>C</original>
    <variation>R</variation>
    <location>
        <position position="387"/>
    </location>
</feature>
<feature type="sequence variant" id="VAR_077319" description="In NPDA; dbSNP:rs2134017443." evidence="46">
    <original>N</original>
    <variation>H</variation>
    <location>
        <position position="391"/>
    </location>
</feature>
<feature type="sequence variant" id="VAR_005063" description="In NPDA." evidence="54">
    <original>N</original>
    <variation>T</variation>
    <location>
        <position position="391"/>
    </location>
</feature>
<feature type="sequence variant" id="VAR_060904" description="In NPDA." evidence="27">
    <location>
        <position position="392"/>
    </location>
</feature>
<feature type="sequence variant" id="VAR_005064" description="In NPDB; low sphingomyelin degradation rates; dbSNP:rs120074125." evidence="51">
    <original>W</original>
    <variation>G</variation>
    <location>
        <position position="393"/>
    </location>
</feature>
<feature type="sequence variant" id="VAR_077320" description="In NPDA; intermediate form." evidence="46">
    <original>W</original>
    <variation>R</variation>
    <location>
        <position position="393"/>
    </location>
</feature>
<feature type="sequence variant" id="VAR_060905" description="In NPDB; dbSNP:rs1451199796." evidence="4">
    <original>A</original>
    <variation>V</variation>
    <location>
        <position position="415"/>
    </location>
</feature>
<feature type="sequence variant" id="VAR_060906" description="In NPDA; dbSNP:rs767492080." evidence="27">
    <original>H</original>
    <variation>R</variation>
    <location>
        <position position="423"/>
    </location>
</feature>
<feature type="sequence variant" id="VAR_015290" description="In NPDB; abolishes enzyme activity; dbSNP:rs120074126." evidence="4 24">
    <original>H</original>
    <variation>Y</variation>
    <location>
        <position position="423"/>
    </location>
</feature>
<feature type="sequence variant" id="VAR_077321" description="In NPDA; dbSNP:rs1554935136." evidence="46">
    <original>G</original>
    <variation>S</variation>
    <location>
        <position position="426"/>
    </location>
</feature>
<feature type="sequence variant" id="VAR_068438" description="In NPDB; results in loss of activity; the patient also carries mutation H-228 that has sufficient activity to account for the Niemann-Pick disease type B phenotype; dbSNP:rs794727629." evidence="29">
    <original>H</original>
    <variation>R</variation>
    <location>
        <position position="427"/>
    </location>
</feature>
<feature type="sequence variant" id="VAR_060907" description="In NPDB; dbSNP:rs779528546." evidence="4">
    <original>C</original>
    <variation>R</variation>
    <location>
        <position position="433"/>
    </location>
</feature>
<feature type="sequence variant" id="VAR_060908" description="In NPDB." evidence="4">
    <original>L</original>
    <variation>P</variation>
    <location>
        <position position="434"/>
    </location>
</feature>
<feature type="sequence variant" id="VAR_060909" description="In NPDB." evidence="4">
    <original>W</original>
    <variation>C</variation>
    <location>
        <position position="437"/>
    </location>
</feature>
<feature type="sequence variant" id="VAR_005065" description="In NPDB; dbSNP:rs267607073." evidence="9">
    <original>S</original>
    <variation>R</variation>
    <location>
        <position position="438"/>
    </location>
</feature>
<feature type="sequence variant" id="VAR_011388" description="In NPDA; dbSNP:rs747143343." evidence="55">
    <original>Y</original>
    <variation>C</variation>
    <location>
        <position position="448"/>
    </location>
</feature>
<feature type="sequence variant" id="VAR_060910" description="In NPDA." evidence="12">
    <original>L</original>
    <variation>P</variation>
    <location>
        <position position="452"/>
    </location>
</feature>
<feature type="sequence variant" id="VAR_068439" description="In NPDB." evidence="26">
    <original>A</original>
    <variation>D</variation>
    <location>
        <position position="453"/>
    </location>
</feature>
<feature type="sequence variant" id="VAR_060911" description="In NPDB; dbSNP:rs1402734026." evidence="4">
    <original>A</original>
    <variation>V</variation>
    <location>
        <position position="454"/>
    </location>
</feature>
<feature type="sequence variant" id="VAR_060912" description="In NPDB." evidence="4">
    <original>G</original>
    <variation>D</variation>
    <location>
        <position position="458"/>
    </location>
</feature>
<feature type="sequence variant" id="VAR_015291" description="In NPDA; dbSNP:rs1319643225." evidence="5 46">
    <original>F</original>
    <variation>S</variation>
    <location>
        <position position="465"/>
    </location>
</feature>
<feature type="sequence variant" id="VAR_060913" description="In NPDA; dbSNP:rs267607074." evidence="27">
    <original>Y</original>
    <variation>S</variation>
    <location>
        <position position="469"/>
    </location>
</feature>
<feature type="sequence variant" id="VAR_075328" description="In NPDB; uncertain significance; dbSNP:rs763566905." evidence="45">
    <original>R</original>
    <variation>Q</variation>
    <location>
        <position position="476"/>
    </location>
</feature>
<feature type="sequence variant" id="VAR_060914" description="In NPDB; some patients have a NPDA/NPDB intermediate phenotype; dbSNP:rs182812968." evidence="4 14 27 38">
    <original>R</original>
    <variation>W</variation>
    <location>
        <position position="476"/>
    </location>
</feature>
<feature type="sequence variant" id="VAR_015292" description="In NPDA and NPDB; dbSNP:rs753508874." evidence="4 5 12 37">
    <original>P</original>
    <variation>L</variation>
    <location>
        <position position="477"/>
    </location>
</feature>
<feature type="sequence variant" id="VAR_060915" description="In NPDB." evidence="4">
    <original>F</original>
    <variation>L</variation>
    <location>
        <position position="482"/>
    </location>
</feature>
<feature type="sequence variant" id="VAR_075329" description="In NPDA; uncertain significance." evidence="45">
    <location>
        <position position="482"/>
    </location>
</feature>
<feature type="sequence variant" id="VAR_060916" description="In NPDA; dbSNP:rs267607075." evidence="27">
    <original>A</original>
    <variation>E</variation>
    <location>
        <position position="484"/>
    </location>
</feature>
<feature type="sequence variant" id="VAR_060917" description="Does not affect enzymatic activity; dbSNP:rs141641266." evidence="4 39 44">
    <original>A</original>
    <variation>V</variation>
    <location>
        <position position="487"/>
    </location>
</feature>
<feature type="sequence variant" id="VAR_060918" description="In NPDB." evidence="27">
    <original>T</original>
    <variation>A</variation>
    <location>
        <position position="488"/>
    </location>
</feature>
<feature type="sequence variant" id="VAR_060919" description="In NPDB; dbSNP:rs398123477." evidence="4">
    <original>Y</original>
    <variation>N</variation>
    <location>
        <position position="490"/>
    </location>
</feature>
<feature type="sequence variant" id="VAR_075330" description="In NPDB; dbSNP:rs144873307." evidence="38">
    <original>G</original>
    <variation>S</variation>
    <location>
        <position position="492"/>
    </location>
</feature>
<feature type="sequence variant" id="VAR_077322" description="In NPDA; intermediate form." evidence="46">
    <original>N</original>
    <variation>I</variation>
    <location>
        <position position="494"/>
    </location>
</feature>
<feature type="sequence variant" id="VAR_060920" description="In NPDB; dbSNP:rs1554935371." evidence="4">
    <original>G</original>
    <variation>S</variation>
    <location>
        <position position="496"/>
    </location>
</feature>
<feature type="sequence variant" id="VAR_060921" description="In NPDB; dbSNP:rs769904764." evidence="4">
    <original>R</original>
    <variation>C</variation>
    <location>
        <position position="498"/>
    </location>
</feature>
<feature type="sequence variant" id="VAR_060922" description="In NPDA; dbSNP:rs120074117." evidence="12 46">
    <original>R</original>
    <variation>H</variation>
    <location>
        <position position="498"/>
    </location>
</feature>
<feature type="sequence variant" id="VAR_005066" description="In NPDA; in 32% of NPDA Ashkenazi Jewish patients; nearly abolishes enzyme activity; dbSNP:rs120074117." evidence="12 24 28 61">
    <original>R</original>
    <variation>L</variation>
    <location>
        <position position="498"/>
    </location>
</feature>
<feature type="sequence variant" id="VAR_060923" evidence="17">
    <original>S</original>
    <variation>G</variation>
    <location>
        <position position="507"/>
    </location>
</feature>
<feature type="sequence variant" id="VAR_054644" description="Does not affect enzymatic activity; dbSNP:rs1050239." evidence="8 11 14 23 42">
    <original>G</original>
    <variation>R</variation>
    <location>
        <position position="508"/>
    </location>
</feature>
<feature type="sequence variant" id="VAR_077323" description="In dbSNP:rs200652683." evidence="46">
    <original>S</original>
    <variation>F</variation>
    <location>
        <position position="510"/>
    </location>
</feature>
<feature type="sequence variant" id="VAR_060924" description="In NPDB; dbSNP:rs1590747902." evidence="4">
    <original>H</original>
    <variation>Q</variation>
    <location>
        <position position="516"/>
    </location>
</feature>
<feature type="sequence variant" id="VAR_060925" description="In NPDB; dbSNP:rs142787001." evidence="4">
    <original>E</original>
    <variation>V</variation>
    <location>
        <position position="517"/>
    </location>
</feature>
<feature type="sequence variant" id="VAR_060926" description="In NPDA; dbSNP:rs371837210." evidence="12">
    <original>Y</original>
    <variation>C</variation>
    <location>
        <position position="519"/>
    </location>
</feature>
<feature type="sequence variant" id="VAR_077324" description="In NPDB." evidence="46">
    <original>I</original>
    <variation>L</variation>
    <location>
        <position position="520"/>
    </location>
</feature>
<feature type="sequence variant" id="VAR_068440" description="In NPDB." evidence="36">
    <original>N</original>
    <variation>S</variation>
    <location>
        <position position="522"/>
    </location>
</feature>
<feature type="sequence variant" id="VAR_068441" description="In NPDB; results in 64% of wild-type activity." evidence="29">
    <original>Q</original>
    <variation>H</variation>
    <location>
        <position position="525"/>
    </location>
</feature>
<feature type="sequence variant" id="VAR_060927" description="In NPDB and NPDA; also in patients with an intermediate form; dbSNP:rs1554935555." evidence="4 14 46">
    <original>W</original>
    <variation>R</variation>
    <location>
        <position position="535"/>
    </location>
</feature>
<feature type="sequence variant" id="VAR_015293" description="In NPDA." evidence="5 37">
    <original>Y</original>
    <variation>H</variation>
    <location>
        <position position="539"/>
    </location>
</feature>
<feature type="sequence variant" id="VAR_077325" description="In NPDB." evidence="46">
    <original>N</original>
    <variation>K</variation>
    <location>
        <position position="549"/>
    </location>
</feature>
<feature type="sequence variant" id="VAR_060928" description="In NPDB." evidence="4 37">
    <original>L</original>
    <variation>P</variation>
    <location>
        <position position="551"/>
    </location>
</feature>
<feature type="sequence variant" id="VAR_060929" description="In NPDB; expresses protein level comparable to wild-type SMPD1 expressing cells; retains 6.8% residual enzyme activity." evidence="15">
    <original>D</original>
    <variation>Y</variation>
    <location>
        <position position="565"/>
    </location>
</feature>
<feature type="sequence variant" id="VAR_075331" description="In NPDA; results in decreased activity; decreased stability." evidence="40">
    <original>F</original>
    <variation>L</variation>
    <location>
        <position position="572"/>
    </location>
</feature>
<feature type="sequence variant" id="VAR_075332" description="In NPDB; uncertain significance." evidence="45">
    <original>H</original>
    <variation>D</variation>
    <location>
        <position position="577"/>
    </location>
</feature>
<feature type="sequence variant" id="VAR_060930" description="In NPDB; dbSNP:rs747342458." evidence="4">
    <original>K</original>
    <variation>N</variation>
    <location>
        <position position="578"/>
    </location>
</feature>
<feature type="sequence variant" id="VAR_005067" description="In NPDA; impairs enzyme activity; also in patients with an intermediate form; dbSNP:rs120074119." evidence="14 19">
    <original>G</original>
    <variation>S</variation>
    <location>
        <position position="579"/>
    </location>
</feature>
<feature type="sequence variant" id="VAR_060931" description="In NPDA." evidence="27">
    <location>
        <position position="594"/>
    </location>
</feature>
<feature type="sequence variant" id="VAR_075333" description="In NPDB; dbSNP:rs1554935731." evidence="45">
    <original>Q</original>
    <variation>R</variation>
    <location>
        <position position="598"/>
    </location>
</feature>
<feature type="sequence variant" id="VAR_075334" description="In NPDB; uncertain significance; dbSNP:rs138531908." evidence="38">
    <original>L</original>
    <variation>F</variation>
    <location>
        <position position="599"/>
    </location>
</feature>
<feature type="sequence variant" id="VAR_060932" description="In NPDB and NPDA; expresses protein level comparable to wild-type SMPD1 expressing cells; retains about 10% residual enzyme activity; loss of location to lysosome; dbSNP:rs370129081." evidence="4 15 32 46">
    <original>R</original>
    <variation>H</variation>
    <location>
        <position position="602"/>
    </location>
</feature>
<feature type="sequence variant" id="VAR_060933" description="In NPDB; expresses protein level comparable to wild-type SMPD1 expressing cells; retains very low enzyme activity; loss of location to lysosome." evidence="4 15 32">
    <original>R</original>
    <variation>P</variation>
    <location>
        <position position="602"/>
    </location>
</feature>
<feature type="sequence variant" id="VAR_077326" evidence="46">
    <original>S</original>
    <variation>G</variation>
    <location>
        <position position="605"/>
    </location>
</feature>
<feature type="sequence variant" id="VAR_075335" description="In NPDB; uncertain significance; dbSNP:rs375915127." evidence="45">
    <original>R</original>
    <variation>C</variation>
    <location>
        <position position="610"/>
    </location>
</feature>
<feature type="sequence variant" id="VAR_005068" description="In NPDB; nearly abolishes enzyme activity; some patients have a NPDA/NPDB intermediate phenotype; loss of location to lysosome." evidence="5 24 25 27 32 37 38">
    <location>
        <position position="610"/>
    </location>
</feature>
<feature type="mutagenesis site" description="No effect on sphingomyelin phosphodiesterase activity. No effect on secretion." evidence="58">
    <original>N</original>
    <variation>G</variation>
    <location>
        <position position="88"/>
    </location>
</feature>
<feature type="mutagenesis site" description="No effect on sphingomyelin phosphodiesterase activity. No effect on subcellular location. No effect on phosphorylation by PRKCD." evidence="20">
    <original>S</original>
    <variation>A</variation>
    <location>
        <position position="151"/>
    </location>
</feature>
<feature type="mutagenesis site" description="Reduces protein levels. Reduces sphingomyelin phosphodiesterase activity. No effect on secretion." evidence="58">
    <original>N</original>
    <variation>G</variation>
    <location>
        <position position="177"/>
    </location>
</feature>
<feature type="mutagenesis site" description="Does not affect cleavage by CASP7." evidence="33">
    <original>D</original>
    <variation>A</variation>
    <location>
        <position position="225"/>
    </location>
</feature>
<feature type="mutagenesis site" description="No effect on sphingomyelin phosphodiesterase activity. No effect on endolysosome location. No effect on phosphorylation by PRKCD." evidence="20">
    <original>S</original>
    <variation>A</variation>
    <location>
        <position position="233"/>
    </location>
</feature>
<feature type="mutagenesis site" description="No effect on sphingomyelin phosphodiesterase activity. No effect on endolysosome location. No effect on phosphorylation by PRKCD." evidence="20">
    <original>S</original>
    <variation>A</variation>
    <location>
        <position position="250"/>
    </location>
</feature>
<feature type="mutagenesis site" description="Abolished cleavage by CASP7." evidence="33">
    <original>D</original>
    <variation>A</variation>
    <location>
        <position position="253"/>
    </location>
</feature>
<feature type="mutagenesis site" description="No effect on sphingomyelin phosphodiesterase activity. No effect on secretion." evidence="58">
    <original>N</original>
    <variation>G</variation>
    <location>
        <position position="337"/>
    </location>
</feature>
<feature type="mutagenesis site" description="Reduces sphingomyelin phosphodiesterase activity. No effect on secretion." evidence="58">
    <original>N</original>
    <variation>G</variation>
    <location>
        <position position="397"/>
    </location>
</feature>
<feature type="mutagenesis site" description="Loss of sphingomyelin phosphodiesterase activity. Loss of secretion." evidence="58">
    <original>N</original>
    <variation>G</variation>
    <location>
        <position position="505"/>
    </location>
</feature>
<feature type="mutagenesis site" description="Abolishes constitutive secretion and decreases secretion in response to IL1B. No effect on lysosomal targeting. No effect on sphingomyelin phosphodiesterase activity. No effect on endolysosome location. Abolishes phosphorylation by PRKCD." evidence="20 31">
    <original>S</original>
    <variation>A</variation>
    <location>
        <position position="510"/>
    </location>
</feature>
<feature type="mutagenesis site" description="Loss of sphingomyelin phosphodiesterase activity. Loss of secretion." evidence="58">
    <original>N</original>
    <variation>G</variation>
    <location>
        <position position="522"/>
    </location>
</feature>
<feature type="sequence conflict" description="In Ref. 5; BAF85077." evidence="66" ref="5">
    <original>G</original>
    <variation>D</variation>
    <location>
        <position position="270"/>
    </location>
</feature>
<feature type="helix" evidence="80">
    <location>
        <begin position="87"/>
        <end position="89"/>
    </location>
</feature>
<feature type="helix" evidence="80">
    <location>
        <begin position="90"/>
        <end position="105"/>
    </location>
</feature>
<feature type="helix" evidence="80">
    <location>
        <begin position="108"/>
        <end position="124"/>
    </location>
</feature>
<feature type="helix" evidence="80">
    <location>
        <begin position="130"/>
        <end position="150"/>
    </location>
</feature>
<feature type="turn" evidence="80">
    <location>
        <begin position="151"/>
        <end position="153"/>
    </location>
</feature>
<feature type="helix" evidence="80">
    <location>
        <begin position="155"/>
        <end position="163"/>
    </location>
</feature>
<feature type="turn" evidence="80">
    <location>
        <begin position="165"/>
        <end position="167"/>
    </location>
</feature>
<feature type="strand" evidence="80">
    <location>
        <begin position="200"/>
        <end position="206"/>
    </location>
</feature>
<feature type="strand" evidence="80">
    <location>
        <begin position="224"/>
        <end position="227"/>
    </location>
</feature>
<feature type="strand" evidence="80">
    <location>
        <begin position="249"/>
        <end position="251"/>
    </location>
</feature>
<feature type="helix" evidence="80">
    <location>
        <begin position="256"/>
        <end position="264"/>
    </location>
</feature>
<feature type="helix" evidence="80">
    <location>
        <begin position="267"/>
        <end position="269"/>
    </location>
</feature>
<feature type="strand" evidence="80">
    <location>
        <begin position="273"/>
        <end position="277"/>
    </location>
</feature>
<feature type="helix" evidence="80">
    <location>
        <begin position="291"/>
        <end position="309"/>
    </location>
</feature>
<feature type="strand" evidence="80">
    <location>
        <begin position="314"/>
        <end position="316"/>
    </location>
</feature>
<feature type="strand" evidence="80">
    <location>
        <begin position="322"/>
        <end position="325"/>
    </location>
</feature>
<feature type="strand" evidence="81">
    <location>
        <begin position="336"/>
        <end position="340"/>
    </location>
</feature>
<feature type="helix" evidence="80">
    <location>
        <begin position="341"/>
        <end position="350"/>
    </location>
</feature>
<feature type="turn" evidence="80">
    <location>
        <begin position="352"/>
        <end position="354"/>
    </location>
</feature>
<feature type="helix" evidence="80">
    <location>
        <begin position="357"/>
        <end position="366"/>
    </location>
</feature>
<feature type="strand" evidence="80">
    <location>
        <begin position="369"/>
        <end position="374"/>
    </location>
</feature>
<feature type="strand" evidence="80">
    <location>
        <begin position="377"/>
        <end position="381"/>
    </location>
</feature>
<feature type="helix" evidence="80">
    <location>
        <begin position="384"/>
        <end position="387"/>
    </location>
</feature>
<feature type="helix" evidence="80">
    <location>
        <begin position="392"/>
        <end position="395"/>
    </location>
</feature>
<feature type="helix" evidence="80">
    <location>
        <begin position="401"/>
        <end position="403"/>
    </location>
</feature>
<feature type="helix" evidence="80">
    <location>
        <begin position="404"/>
        <end position="418"/>
    </location>
</feature>
<feature type="strand" evidence="80">
    <location>
        <begin position="421"/>
        <end position="425"/>
    </location>
</feature>
<feature type="helix" evidence="80">
    <location>
        <begin position="430"/>
        <end position="432"/>
    </location>
</feature>
<feature type="helix" evidence="80">
    <location>
        <begin position="435"/>
        <end position="447"/>
    </location>
</feature>
<feature type="turn" evidence="80">
    <location>
        <begin position="448"/>
        <end position="451"/>
    </location>
</feature>
<feature type="strand" evidence="80">
    <location>
        <begin position="452"/>
        <end position="457"/>
    </location>
</feature>
<feature type="strand" evidence="80">
    <location>
        <begin position="464"/>
        <end position="469"/>
    </location>
</feature>
<feature type="turn" evidence="80">
    <location>
        <begin position="471"/>
        <end position="473"/>
    </location>
</feature>
<feature type="strand" evidence="80">
    <location>
        <begin position="476"/>
        <end position="483"/>
    </location>
</feature>
<feature type="turn" evidence="80">
    <location>
        <begin position="490"/>
        <end position="492"/>
    </location>
</feature>
<feature type="strand" evidence="80">
    <location>
        <begin position="496"/>
        <end position="503"/>
    </location>
</feature>
<feature type="strand" evidence="80">
    <location>
        <begin position="513"/>
        <end position="520"/>
    </location>
</feature>
<feature type="helix" evidence="80">
    <location>
        <begin position="523"/>
        <end position="526"/>
    </location>
</feature>
<feature type="strand" evidence="80">
    <location>
        <begin position="536"/>
        <end position="540"/>
    </location>
</feature>
<feature type="helix" evidence="80">
    <location>
        <begin position="541"/>
        <end position="545"/>
    </location>
</feature>
<feature type="helix" evidence="80">
    <location>
        <begin position="552"/>
        <end position="563"/>
    </location>
</feature>
<feature type="helix" evidence="80">
    <location>
        <begin position="566"/>
        <end position="576"/>
    </location>
</feature>
<feature type="turn" evidence="80">
    <location>
        <begin position="577"/>
        <end position="579"/>
    </location>
</feature>
<feature type="helix" evidence="80">
    <location>
        <begin position="588"/>
        <end position="599"/>
    </location>
</feature>
<feature type="strand" evidence="81">
    <location>
        <begin position="602"/>
        <end position="604"/>
    </location>
</feature>
<feature type="helix" evidence="80">
    <location>
        <begin position="606"/>
        <end position="609"/>
    </location>
</feature>
<feature type="turn" evidence="80">
    <location>
        <begin position="610"/>
        <end position="612"/>
    </location>
</feature>